<comment type="function">
    <text evidence="2 8 15 16 20 22 28 30 31 33 37">Involved in diverse cellular processes such as ribosome biogenesis, centrosome duplication, protein chaperoning, histone assembly, cell proliferation, and regulation of tumor suppressors p53/TP53 and ARF. Binds ribosome presumably to drive ribosome nuclear export. Associated with nucleolar ribonucleoprotein structures and bind single-stranded nucleic acids. Acts as a chaperonin for the core histones H3, H2B and H4. Stimulates APEX1 endonuclease activity on apurinic/apyrimidinic (AP) double-stranded DNA but inhibits APEX1 endonuclease activity on AP single-stranded RNA. May exert a control of APEX1 endonuclease activity within nucleoli devoted to repair AP on rDNA and the removal of oxidized rRNA molecules. In concert with BRCA2, regulates centrosome duplication. Regulates centriole duplication: phosphorylation by PLK2 is able to trigger centriole replication. Negatively regulates the activation of EIF2AK2/PKR and suppresses apoptosis through inhibition of EIF2AK2/PKR autophosphorylation. Antagonizes the inhibitory effect of ATF5 on cell proliferation and relieves ATF5-induced G2/M blockade (PubMed:22528486). In complex with MYC enhances the transcription of MYC target genes (PubMed:25956029). May act as chaperonin or cotransporter in the nucleolar localization of transcription termination factor TTF1 (By similarity).</text>
</comment>
<comment type="subunit">
    <text evidence="2 8 11 13 16 17 18 21 22 24 25 26 29 30 31 32 33 34 35 36 37 39 40">Decamer formed by two pentameric rings associated in a head-to-head fashion (By similarity). Disulfide-linked dimers under certain conditions (PubMed:25818168). The SWAP complex consists of NPM1, NCL, PARP1 and SWAP70 (By similarity). Interacts with NSUN2 and SENP3. Interacts with the methylated form of RPS10. Interacts (via N-terminal domain) with APEX1; the interaction is RNA-dependent and decreases in hydrogen peroxide-damaged cells. Interacts with isoform 1 of NEK2. Interacts with ROCK2 and BRCA2. Interacts with RPGR. Interacts with CENPW. Interacts with EIF2AK2/PKR. Interacts with CEBPA (isoform 4) (PubMed:20075868). Interacts with DDX31; this interaction prevents interaction between NPM1 and HDM2 (PubMed:23019224). Interacts with MYC; competitive with NOP53 (PubMed:25956029). Interacts with NOP53; the interaction is direct and competitive with MYC (PubMed:25956029). Interacts with LRRC34 (By similarity). Interacts with RRP1B (PubMed:19710015, PubMed:20926688). Interacts with NPM3 (PubMed:22362753). Interacts with ALKBH2 (PubMed:23972994). Interacts with TTF1 (via C-terminal region) (By similarity). Interacts with NOP2 (PubMed:8089149). Interacts with ARID3C (via REKLES DOMAIN); the interaction mediates ARID3C nuclear shuttling (PubMed:38231884).</text>
</comment>
<comment type="subunit">
    <text evidence="6">(Microbial infection) Interacts with hepatitis delta virus S-HDAg.</text>
</comment>
<comment type="subunit">
    <text evidence="42">(Microbial infection) Interacts with HTLV1 Rex protein (via N-terminal nuclear localization signal).</text>
</comment>
<comment type="interaction">
    <interactant intactId="EBI-78579">
        <id>P06748</id>
    </interactant>
    <interactant intactId="EBI-448680">
        <id>O14965</id>
        <label>AURKA</label>
    </interactant>
    <organismsDiffer>false</organismsDiffer>
    <experiments>3</experiments>
</comment>
<comment type="interaction">
    <interactant intactId="EBI-78579">
        <id>P06748</id>
    </interactant>
    <interactant intactId="EBI-624291">
        <id>Q96GD4</id>
        <label>AURKB</label>
    </interactant>
    <organismsDiffer>false</organismsDiffer>
    <experiments>6</experiments>
</comment>
<comment type="interaction">
    <interactant intactId="EBI-78579">
        <id>P06748</id>
    </interactant>
    <interactant intactId="EBI-5461329">
        <id>Q96CT7</id>
        <label>CCDC124</label>
    </interactant>
    <organismsDiffer>false</organismsDiffer>
    <experiments>8</experiments>
</comment>
<comment type="interaction">
    <interactant intactId="EBI-78579">
        <id>P06748</id>
    </interactant>
    <interactant intactId="EBI-625922">
        <id>Q8N726</id>
        <label>CDKN2A</label>
    </interactant>
    <organismsDiffer>false</organismsDiffer>
    <experiments>2</experiments>
</comment>
<comment type="interaction">
    <interactant intactId="EBI-78579">
        <id>P06748</id>
    </interactant>
    <interactant intactId="EBI-741977">
        <id>Q96MT8</id>
        <label>CEP63</label>
    </interactant>
    <organismsDiffer>false</organismsDiffer>
    <experiments>2</experiments>
</comment>
<comment type="interaction">
    <interactant intactId="EBI-78579">
        <id>P06748</id>
    </interactant>
    <interactant intactId="EBI-3904738">
        <id>P10176</id>
        <label>COX8A</label>
    </interactant>
    <organismsDiffer>false</organismsDiffer>
    <experiments>3</experiments>
</comment>
<comment type="interaction">
    <interactant intactId="EBI-78579">
        <id>P06748</id>
    </interactant>
    <interactant intactId="EBI-347859">
        <id>Q10570</id>
        <label>CPSF1</label>
    </interactant>
    <organismsDiffer>false</organismsDiffer>
    <experiments>2</experiments>
</comment>
<comment type="interaction">
    <interactant intactId="EBI-78579">
        <id>P06748</id>
    </interactant>
    <interactant intactId="EBI-640775">
        <id>P19525</id>
        <label>EIF2AK2</label>
    </interactant>
    <organismsDiffer>false</organismsDiffer>
    <experiments>4</experiments>
</comment>
<comment type="interaction">
    <interactant intactId="EBI-78579">
        <id>P06748</id>
    </interactant>
    <interactant intactId="EBI-347740">
        <id>P60228</id>
        <label>EIF3E</label>
    </interactant>
    <organismsDiffer>false</organismsDiffer>
    <experiments>3</experiments>
</comment>
<comment type="interaction">
    <interactant intactId="EBI-78579">
        <id>P06748</id>
    </interactant>
    <interactant intactId="EBI-301834">
        <id>Q13547</id>
        <label>HDAC1</label>
    </interactant>
    <organismsDiffer>false</organismsDiffer>
    <experiments>2</experiments>
</comment>
<comment type="interaction">
    <interactant intactId="EBI-78579">
        <id>P06748</id>
    </interactant>
    <interactant intactId="EBI-301821">
        <id>Q92769</id>
        <label>HDAC2</label>
    </interactant>
    <organismsDiffer>false</organismsDiffer>
    <experiments>2</experiments>
</comment>
<comment type="interaction">
    <interactant intactId="EBI-78579">
        <id>P06748</id>
    </interactant>
    <interactant intactId="EBI-3916399">
        <id>Q9BXL5</id>
        <label>HEMGN</label>
    </interactant>
    <organismsDiffer>false</organismsDiffer>
    <experiments>7</experiments>
</comment>
<comment type="interaction">
    <interactant intactId="EBI-78579">
        <id>P06748</id>
    </interactant>
    <interactant intactId="EBI-2432309">
        <id>Q92876</id>
        <label>KLK6</label>
    </interactant>
    <organismsDiffer>false</organismsDiffer>
    <experiments>3</experiments>
</comment>
<comment type="interaction">
    <interactant intactId="EBI-78579">
        <id>P06748</id>
    </interactant>
    <interactant intactId="EBI-358297">
        <id>O00505</id>
        <label>KPNA3</label>
    </interactant>
    <organismsDiffer>false</organismsDiffer>
    <experiments>2</experiments>
</comment>
<comment type="interaction">
    <interactant intactId="EBI-78579">
        <id>P06748</id>
    </interactant>
    <interactant intactId="EBI-396343">
        <id>O00629</id>
        <label>KPNA4</label>
    </interactant>
    <organismsDiffer>false</organismsDiffer>
    <experiments>2</experiments>
</comment>
<comment type="interaction">
    <interactant intactId="EBI-78579">
        <id>P06748</id>
    </interactant>
    <interactant intactId="EBI-2878091">
        <id>Q71RC2</id>
        <label>LARP4</label>
    </interactant>
    <organismsDiffer>false</organismsDiffer>
    <experiments>3</experiments>
</comment>
<comment type="interaction">
    <interactant intactId="EBI-78579">
        <id>P06748</id>
    </interactant>
    <interactant intactId="EBI-389668">
        <id>Q00987</id>
        <label>MDM2</label>
    </interactant>
    <organismsDiffer>false</organismsDiffer>
    <experiments>5</experiments>
</comment>
<comment type="interaction">
    <interactant intactId="EBI-78579">
        <id>P06748</id>
    </interactant>
    <interactant intactId="EBI-6916466">
        <id>Q9BZQ8</id>
        <label>NIBAN1</label>
    </interactant>
    <organismsDiffer>false</organismsDiffer>
    <experiments>7</experiments>
</comment>
<comment type="interaction">
    <interactant intactId="EBI-78579">
        <id>P06748</id>
    </interactant>
    <interactant intactId="EBI-6658150">
        <id>Q86SE8</id>
        <label>NPM2</label>
    </interactant>
    <organismsDiffer>false</organismsDiffer>
    <experiments>8</experiments>
</comment>
<comment type="interaction">
    <interactant intactId="EBI-78579">
        <id>P06748</id>
    </interactant>
    <interactant intactId="EBI-12193061">
        <id>Q86SE8-2</id>
        <label>NPM2</label>
    </interactant>
    <organismsDiffer>false</organismsDiffer>
    <experiments>5</experiments>
</comment>
<comment type="interaction">
    <interactant intactId="EBI-78579">
        <id>P06748</id>
    </interactant>
    <interactant intactId="EBI-716449">
        <id>Q8IZL8</id>
        <label>PELP1</label>
    </interactant>
    <organismsDiffer>false</organismsDiffer>
    <experiments>4</experiments>
</comment>
<comment type="interaction">
    <interactant intactId="EBI-78579">
        <id>P06748</id>
    </interactant>
    <interactant intactId="EBI-721782">
        <id>Q96BK5</id>
        <label>PINX1</label>
    </interactant>
    <organismsDiffer>false</organismsDiffer>
    <experiments>12</experiments>
</comment>
<comment type="interaction">
    <interactant intactId="EBI-78579">
        <id>P06748</id>
    </interactant>
    <interactant intactId="EBI-1051893">
        <id>P49207</id>
        <label>RPL34</label>
    </interactant>
    <organismsDiffer>false</organismsDiffer>
    <experiments>2</experiments>
</comment>
<comment type="interaction">
    <interactant intactId="EBI-78579">
        <id>P06748</id>
    </interactant>
    <interactant intactId="EBI-356625">
        <id>P62753</id>
        <label>RPS6</label>
    </interactant>
    <organismsDiffer>false</organismsDiffer>
    <experiments>3</experiments>
</comment>
<comment type="interaction">
    <interactant intactId="EBI-78579">
        <id>P06748</id>
    </interactant>
    <interactant intactId="EBI-2880236">
        <id>Q9H4L4</id>
        <label>SENP3</label>
    </interactant>
    <organismsDiffer>false</organismsDiffer>
    <experiments>7</experiments>
</comment>
<comment type="interaction">
    <interactant intactId="EBI-78579">
        <id>P06748</id>
    </interactant>
    <interactant intactId="EBI-1772203">
        <id>O14746</id>
        <label>TERT</label>
    </interactant>
    <organismsDiffer>false</organismsDiffer>
    <experiments>5</experiments>
</comment>
<comment type="interaction">
    <interactant intactId="EBI-78579">
        <id>P06748</id>
    </interactant>
    <interactant intactId="EBI-347351">
        <id>P05549</id>
        <label>TFAP2A</label>
    </interactant>
    <organismsDiffer>false</organismsDiffer>
    <experiments>6</experiments>
</comment>
<comment type="interaction">
    <interactant intactId="EBI-78579">
        <id>P06748</id>
    </interactant>
    <interactant intactId="EBI-366083">
        <id>P04637</id>
        <label>TP53</label>
    </interactant>
    <organismsDiffer>false</organismsDiffer>
    <experiments>6</experiments>
</comment>
<comment type="interaction">
    <interactant intactId="EBI-78579">
        <id>P06748</id>
    </interactant>
    <interactant intactId="EBI-347088">
        <id>P63104</id>
        <label>YWHAZ</label>
    </interactant>
    <organismsDiffer>false</organismsDiffer>
    <experiments>2</experiments>
</comment>
<comment type="interaction">
    <interactant intactId="EBI-78579">
        <id>P06748</id>
    </interactant>
    <interactant intactId="EBI-1202287">
        <id>Q64364</id>
        <label>Cdkn2a</label>
    </interactant>
    <organismsDiffer>true</organismsDiffer>
    <experiments>2</experiments>
</comment>
<comment type="interaction">
    <interactant intactId="EBI-78579">
        <id>P06748</id>
    </interactant>
    <interactant intactId="EBI-7481199">
        <id>P24938</id>
        <label>L2</label>
    </interactant>
    <organismsDiffer>true</organismsDiffer>
    <experiments>4</experiments>
</comment>
<comment type="interaction">
    <interactant intactId="EBI-78579">
        <id>P06748</id>
    </interactant>
    <interactant intactId="EBI-7481182">
        <id>P68951</id>
        <label>L2</label>
    </interactant>
    <organismsDiffer>true</organismsDiffer>
    <experiments>5</experiments>
</comment>
<comment type="interaction">
    <interactant intactId="EBI-78579">
        <id>P06748</id>
    </interactant>
    <interactant intactId="EBI-10042882">
        <id>P0DOE7</id>
        <label>M</label>
    </interactant>
    <organismsDiffer>true</organismsDiffer>
    <experiments>3</experiments>
</comment>
<comment type="interaction">
    <interactant intactId="EBI-78579">
        <id>P06748</id>
    </interactant>
    <interactant intactId="EBI-25616456">
        <id>Q6UPD4</id>
        <label>NP</label>
    </interactant>
    <organismsDiffer>true</organismsDiffer>
    <experiments>4</experiments>
</comment>
<comment type="interaction">
    <interactant intactId="EBI-78579">
        <id>P06748</id>
    </interactant>
    <interactant intactId="EBI-8430745">
        <id>P03427</id>
        <label>PB2</label>
    </interactant>
    <organismsDiffer>true</organismsDiffer>
    <experiments>3</experiments>
</comment>
<comment type="interaction">
    <interactant intactId="EBI-78579">
        <id>P06748</id>
    </interactant>
    <interactant intactId="EBI-9081051">
        <id>B1Q2W9</id>
        <label>pre-C/C</label>
    </interactant>
    <organismsDiffer>true</organismsDiffer>
    <experiments>8</experiments>
</comment>
<comment type="interaction">
    <interactant intactId="EBI-78579">
        <id>P06748</id>
    </interactant>
    <interactant intactId="EBI-626601">
        <id>Q98147</id>
    </interactant>
    <organismsDiffer>true</organismsDiffer>
    <experiments>2</experiments>
</comment>
<comment type="interaction">
    <interactant intactId="EBI-354150">
        <id>P06748-1</id>
    </interactant>
    <interactant intactId="EBI-15826012">
        <id>P49450-1</id>
        <label>CENPA</label>
    </interactant>
    <organismsDiffer>false</organismsDiffer>
    <experiments>3</experiments>
</comment>
<comment type="interaction">
    <interactant intactId="EBI-354150">
        <id>P06748-1</id>
    </interactant>
    <interactant intactId="EBI-80140">
        <id>P63165</id>
        <label>SUMO1</label>
    </interactant>
    <organismsDiffer>false</organismsDiffer>
    <experiments>3</experiments>
</comment>
<comment type="interaction">
    <interactant intactId="EBI-354150">
        <id>P06748-1</id>
    </interactant>
    <interactant intactId="EBI-366083">
        <id>P04637</id>
        <label>TP53</label>
    </interactant>
    <organismsDiffer>false</organismsDiffer>
    <experiments>3</experiments>
</comment>
<comment type="interaction">
    <interactant intactId="EBI-354150">
        <id>P06748-1</id>
    </interactant>
    <interactant intactId="EBI-308443">
        <id>Q14669</id>
        <label>TRIP12</label>
    </interactant>
    <organismsDiffer>false</organismsDiffer>
    <experiments>2</experiments>
</comment>
<comment type="interaction">
    <interactant intactId="EBI-354154">
        <id>P06748-2</id>
    </interactant>
    <interactant intactId="EBI-12193061">
        <id>Q86SE8-2</id>
        <label>NPM2</label>
    </interactant>
    <organismsDiffer>false</organismsDiffer>
    <experiments>4</experiments>
</comment>
<comment type="subcellular location">
    <subcellularLocation>
        <location evidence="23 33 36 37">Nucleus</location>
        <location evidence="23 33 36 37">Nucleolus</location>
    </subcellularLocation>
    <subcellularLocation>
        <location evidence="36">Nucleus</location>
        <location evidence="36">Nucleoplasm</location>
    </subcellularLocation>
    <subcellularLocation>
        <location evidence="9">Cytoplasm</location>
        <location evidence="9">Cytoskeleton</location>
        <location evidence="9">Microtubule organizing center</location>
        <location evidence="9">Centrosome</location>
    </subcellularLocation>
    <text evidence="39">Generally nucleolar, but is translocated to the nucleoplasm in case of serum starvation or treatment with anticancer drugs. Has been found in the cytoplasm in patients with primary acute myelogenous leukemia (AML), but not with secondary AML. Co-localizes with the methylated form of RPS10 in the granular component (GC) region of the nucleolus. Colocalized with nucleolin and APEX1 in nucleoli. Isoform 1 of NEK2 is required for its localization to the centrosome during mitosis. Can shuttle between cytoplasm and nucleus (PubMed:38231884).</text>
</comment>
<comment type="alternative products">
    <event type="alternative splicing"/>
    <isoform>
        <id>P06748-1</id>
        <name>1</name>
        <sequence type="displayed"/>
    </isoform>
    <isoform>
        <id>P06748-2</id>
        <name>2</name>
        <sequence type="described" ref="VSP_003616"/>
    </isoform>
    <isoform>
        <id>P06748-3</id>
        <name>3</name>
        <sequence type="described" ref="VSP_043599"/>
    </isoform>
</comment>
<comment type="PTM">
    <text evidence="15 46">Acetylated at C-terminal lysine residues, thereby increasing affinity to histones.</text>
</comment>
<comment type="PTM">
    <text>ADP-ribosylated.</text>
</comment>
<comment type="PTM">
    <text evidence="5 7 8 10 11 27 28 46">Phosphorylated at Ser-4 by PLK1 and PLK2. Phosphorylation at Ser-4 by PLK2 in S phase is required for centriole duplication and is sufficient to trigger centriole replication. Phosphorylation at Ser-4 by PLK1 takes place during mitosis. Phosphorylated by CDK2 at Ser-125 and Thr-199. Phosphorylation at Thr-199 may trigger initiation of centrosome duplication. Phosphorylated by CDK1 at Thr-199, Thr-219, Thr-234 and Thr-237 during cell mitosis. When these four sites are phosphorated, RNA-binding activity seem to be abolished. May be phosphorylated at Ser-70 by NEK2. The Thr-199 phosphorylated form has higher affinity for ROCK2. CDK6 triggers Thr-199 phosphorylation when complexed to Kaposi's sarcoma herpesvirus (KSHV) V-cyclin, leading to viral reactivation by reducing viral LANA levels.</text>
</comment>
<comment type="PTM">
    <text evidence="14">Sumoylated by ARF.</text>
</comment>
<comment type="PTM">
    <text evidence="23 36">Ubiquitinated. Ubiquitination leads to proteasomal degradation. Deubiquitinated by USP36 (PubMed:19208757).</text>
</comment>
<comment type="disease">
    <text evidence="41 45">A chromosomal aberration involving NPM1 is found in a form of non-Hodgkin lymphoma. Translocation t(2;5)(p23;q35) with ALK. The resulting chimeric NPM1-ALK protein homodimerize and the kinase becomes constitutively activated.</text>
</comment>
<comment type="disease">
    <text evidence="43">A chromosomal aberration involving NPM1 is found in a form of acute promyelocytic leukemia. Translocation t(5;17)(q32;q11) with RARA.</text>
</comment>
<comment type="disease">
    <text evidence="44">A chromosomal aberration involving NPM1 is a cause of myelodysplastic syndrome (MDS). Translocation t(3;5)(q25.1;q34) with MLF1.</text>
</comment>
<comment type="disease">
    <text evidence="12">Defects in NPM1 are associated with acute myelogenous leukemia (AML). Mutations in exon 12 affecting the C-terminus of the protein are associated with an aberrant cytoplasmic location.</text>
</comment>
<comment type="similarity">
    <text evidence="49">Belongs to the nucleoplasmin family.</text>
</comment>
<comment type="online information" name="Atlas of Genetics and Cytogenetics in Oncology and Haematology">
    <link uri="https://atlasgeneticsoncology.org/gene/22/NPM1"/>
</comment>
<sequence>MEDSMDMDMSPLRPQNYLFGCELKADKDYHFKVDNDENEHQLSLRTVSLGAGAKDELHIVEAEAMNYEGSPIKVTLATLKMSVQPTVSLGGFEITPPVVLRLKCGSGPVHISGQHLVAVEEDAESEDEEEEDVKLLSISGKRSAPGGGSKVPQKKVKLAADEDDDDDDEEDDDEDDDDDDFDDEEAEEKAPVKKSIRDTPAKNAQKSNQNGKDSKPSSTPRSKGQESFKKQEKTPKTPKGPSSVEDIKAKMQASIEKGGSLPKVEAKFINYVKNCFRMTDQEAIQDLWQWRKSL</sequence>
<name>NPM_HUMAN</name>
<protein>
    <recommendedName>
        <fullName>Nucleophosmin</fullName>
        <shortName>NPM</shortName>
    </recommendedName>
    <alternativeName>
        <fullName>Nucleolar phosphoprotein B23</fullName>
    </alternativeName>
    <alternativeName>
        <fullName>Nucleolar protein NO38</fullName>
    </alternativeName>
    <alternativeName>
        <fullName>Numatrin</fullName>
    </alternativeName>
</protein>
<feature type="chain" id="PRO_0000219481" description="Nucleophosmin">
    <location>
        <begin position="1"/>
        <end position="294"/>
    </location>
</feature>
<feature type="region of interest" description="Required for interaction with SENP3">
    <location>
        <begin position="1"/>
        <end position="186"/>
    </location>
</feature>
<feature type="region of interest" description="Necessary for interaction with APEX1" evidence="22">
    <location>
        <begin position="1"/>
        <end position="117"/>
    </location>
</feature>
<feature type="region of interest" description="Disordered" evidence="4">
    <location>
        <begin position="120"/>
        <end position="247"/>
    </location>
</feature>
<feature type="region of interest" description="Interaction with NOP2" evidence="40">
    <location>
        <begin position="187"/>
        <end position="215"/>
    </location>
</feature>
<feature type="region of interest" description="Required for nucleolar localization">
    <location>
        <begin position="243"/>
        <end position="294"/>
    </location>
</feature>
<feature type="short sequence motif" description="Nuclear localization signal" evidence="3">
    <location>
        <begin position="152"/>
        <end position="157"/>
    </location>
</feature>
<feature type="short sequence motif" description="Nuclear localization signal" evidence="3">
    <location>
        <begin position="191"/>
        <end position="197"/>
    </location>
</feature>
<feature type="compositionally biased region" description="Acidic residues" evidence="4">
    <location>
        <begin position="120"/>
        <end position="132"/>
    </location>
</feature>
<feature type="compositionally biased region" description="Acidic residues" evidence="4">
    <location>
        <begin position="161"/>
        <end position="187"/>
    </location>
</feature>
<feature type="compositionally biased region" description="Basic and acidic residues" evidence="4">
    <location>
        <begin position="188"/>
        <end position="200"/>
    </location>
</feature>
<feature type="compositionally biased region" description="Polar residues" evidence="4">
    <location>
        <begin position="202"/>
        <end position="222"/>
    </location>
</feature>
<feature type="compositionally biased region" description="Basic and acidic residues" evidence="4">
    <location>
        <begin position="223"/>
        <end position="235"/>
    </location>
</feature>
<feature type="site" description="Interaction between pentamers" evidence="1">
    <location>
        <position position="55"/>
    </location>
</feature>
<feature type="site" description="Interaction between pentamers" evidence="1">
    <location>
        <position position="80"/>
    </location>
</feature>
<feature type="site" description="Breakpoint for translocation to form NPM1-MLF1" evidence="44">
    <location>
        <begin position="175"/>
        <end position="176"/>
    </location>
</feature>
<feature type="modified residue" description="N-acetylmethionine" evidence="46 60 63 64 65">
    <location>
        <position position="1"/>
    </location>
</feature>
<feature type="modified residue" description="Phosphoserine; by PLK1 and PLK2" evidence="10 28 63 64 66">
    <location>
        <position position="4"/>
    </location>
</feature>
<feature type="modified residue" description="Phosphoserine" evidence="63 66">
    <location>
        <position position="10"/>
    </location>
</feature>
<feature type="modified residue" description="N6-acetyllysine; alternate" evidence="61">
    <location>
        <position position="32"/>
    </location>
</feature>
<feature type="modified residue" description="Phosphoserine" evidence="66">
    <location>
        <position position="43"/>
    </location>
</feature>
<feature type="modified residue" description="Phosphotyrosine" evidence="2">
    <location>
        <position position="67"/>
    </location>
</feature>
<feature type="modified residue" description="Phosphoserine" evidence="53 54 55 57 58 62 63 64 66 67">
    <location>
        <position position="70"/>
    </location>
</feature>
<feature type="modified residue" description="Phosphothreonine" evidence="57">
    <location>
        <position position="75"/>
    </location>
</feature>
<feature type="modified residue" description="Phosphothreonine" evidence="53 57 63 66">
    <location>
        <position position="95"/>
    </location>
</feature>
<feature type="modified residue" description="Phosphoserine; by CDK2" evidence="46 55 56 57 58 59 62 63 64 66">
    <location>
        <position position="125"/>
    </location>
</feature>
<feature type="modified residue" description="Phosphoserine" evidence="63">
    <location>
        <position position="137"/>
    </location>
</feature>
<feature type="modified residue" description="Phosphoserine" evidence="57 63 66">
    <location>
        <position position="139"/>
    </location>
</feature>
<feature type="modified residue" description="N6-acetyllysine; alternate" evidence="52 61">
    <location>
        <position position="150"/>
    </location>
</feature>
<feature type="modified residue" description="N6-acetyllysine" evidence="52">
    <location>
        <position position="154"/>
    </location>
</feature>
<feature type="modified residue" description="Phosphothreonine; by CDK1, CDK2 and CDK6" evidence="7 27 54 63">
    <location>
        <position position="199"/>
    </location>
</feature>
<feature type="modified residue" description="ADP-ribosylserine" evidence="38">
    <location>
        <position position="207"/>
    </location>
</feature>
<feature type="modified residue" description="N6-acetyllysine" evidence="15 52">
    <location>
        <position position="212"/>
    </location>
</feature>
<feature type="modified residue" description="Phosphothreonine; by CDK1" evidence="50">
    <location>
        <position position="219"/>
    </location>
</feature>
<feature type="modified residue" description="Phosphoserine" evidence="64">
    <location>
        <position position="227"/>
    </location>
</feature>
<feature type="modified residue" description="N6-acetyllysine" evidence="15">
    <location>
        <position position="229"/>
    </location>
</feature>
<feature type="modified residue" description="N6-acetyllysine; alternate" evidence="15">
    <location>
        <position position="230"/>
    </location>
</feature>
<feature type="modified residue" description="Phosphothreonine; by CDK1" evidence="57 66">
    <location>
        <position position="234"/>
    </location>
</feature>
<feature type="modified residue" description="Phosphothreonine; by CDK1" evidence="7 57 66">
    <location>
        <position position="237"/>
    </location>
</feature>
<feature type="modified residue" description="Phosphoserine" evidence="63 66">
    <location>
        <position position="242"/>
    </location>
</feature>
<feature type="modified residue" description="Phosphoserine" evidence="57 63 64 66 67">
    <location>
        <position position="243"/>
    </location>
</feature>
<feature type="modified residue" description="N6-acetyllysine; alternate" evidence="15">
    <location>
        <position position="250"/>
    </location>
</feature>
<feature type="modified residue" description="Phosphoserine" evidence="54 64 66">
    <location>
        <position position="254"/>
    </location>
</feature>
<feature type="modified residue" description="N6-acetyllysine; alternate" evidence="15 61">
    <location>
        <position position="257"/>
    </location>
</feature>
<feature type="modified residue" description="Phosphoserine" evidence="63 66">
    <location>
        <position position="260"/>
    </location>
</feature>
<feature type="modified residue" description="N6-acetyllysine; alternate" evidence="61">
    <location>
        <position position="267"/>
    </location>
</feature>
<feature type="modified residue" description="N6-succinyllysine; alternate" evidence="2">
    <location>
        <position position="267"/>
    </location>
</feature>
<feature type="modified residue" description="N6-acetyllysine; alternate" evidence="61">
    <location>
        <position position="273"/>
    </location>
</feature>
<feature type="modified residue" description="Phosphothreonine" evidence="55 63">
    <location>
        <position position="279"/>
    </location>
</feature>
<feature type="modified residue" description="N6-acetyllysine" evidence="15">
    <location>
        <position position="292"/>
    </location>
</feature>
<feature type="cross-link" description="Glycyl lysine isopeptide (Lys-Gly) (interchain with G-Cter in SUMO2)" evidence="69">
    <location>
        <position position="27"/>
    </location>
</feature>
<feature type="cross-link" description="Glycyl lysine isopeptide (Lys-Gly) (interchain with G-Cter in SUMO1); alternate" evidence="68">
    <location>
        <position position="32"/>
    </location>
</feature>
<feature type="cross-link" description="Glycyl lysine isopeptide (Lys-Gly) (interchain with G-Cter in SUMO2); alternate" evidence="68 69 70 71 72">
    <location>
        <position position="32"/>
    </location>
</feature>
<feature type="cross-link" description="Glycyl lysine isopeptide (Lys-Gly) (interchain with G-Cter in SUMO2)" evidence="72">
    <location>
        <position position="141"/>
    </location>
</feature>
<feature type="cross-link" description="Glycyl lysine isopeptide (Lys-Gly) (interchain with G-Cter in SUMO2); alternate" evidence="72">
    <location>
        <position position="150"/>
    </location>
</feature>
<feature type="cross-link" description="Glycyl lysine isopeptide (Lys-Gly) (interchain with G-Cter in SUMO2)" evidence="71 72">
    <location>
        <position position="215"/>
    </location>
</feature>
<feature type="cross-link" description="Glycyl lysine isopeptide (Lys-Gly) (interchain with G-Cter in SUMO); alternate">
    <location>
        <position position="230"/>
    </location>
</feature>
<feature type="cross-link" description="Glycyl lysine isopeptide (Lys-Gly) (interchain with G-Cter in SUMO1); alternate" evidence="68">
    <location>
        <position position="248"/>
    </location>
</feature>
<feature type="cross-link" description="Glycyl lysine isopeptide (Lys-Gly) (interchain with G-Cter in SUMO2); alternate" evidence="68 69 72">
    <location>
        <position position="248"/>
    </location>
</feature>
<feature type="cross-link" description="Glycyl lysine isopeptide (Lys-Gly) (interchain with G-Cter in SUMO2); alternate" evidence="69 72">
    <location>
        <position position="250"/>
    </location>
</feature>
<feature type="cross-link" description="Glycyl lysine isopeptide (Lys-Gly) (interchain with G-Cter in SUMO1); alternate" evidence="68">
    <location>
        <position position="257"/>
    </location>
</feature>
<feature type="cross-link" description="Glycyl lysine isopeptide (Lys-Gly) (interchain with G-Cter in SUMO2); alternate" evidence="68 72">
    <location>
        <position position="257"/>
    </location>
</feature>
<feature type="cross-link" description="Glycyl lysine isopeptide (Lys-Gly) (interchain with G-Cter in SUMO); alternate" evidence="14">
    <location>
        <position position="263"/>
    </location>
</feature>
<feature type="cross-link" description="Glycyl lysine isopeptide (Lys-Gly) (interchain with G-Cter in SUMO2); alternate" evidence="72">
    <location>
        <position position="263"/>
    </location>
</feature>
<feature type="cross-link" description="Glycyl lysine isopeptide (Lys-Gly) (interchain with G-Cter in SUMO1); alternate" evidence="68">
    <location>
        <position position="267"/>
    </location>
</feature>
<feature type="cross-link" description="Glycyl lysine isopeptide (Lys-Gly) (interchain with G-Cter in SUMO2); alternate" evidence="72">
    <location>
        <position position="267"/>
    </location>
</feature>
<feature type="cross-link" description="Glycyl lysine isopeptide (Lys-Gly) (interchain with G-Cter in SUMO2); alternate" evidence="72">
    <location>
        <position position="273"/>
    </location>
</feature>
<feature type="splice variant" id="VSP_003616" description="In isoform 2." evidence="47">
    <location>
        <begin position="195"/>
        <end position="223"/>
    </location>
</feature>
<feature type="splice variant" id="VSP_043599" description="In isoform 3." evidence="47 48">
    <original>GGSLPKVEAKFINYVKNCFRMTDQEAIQDLWQWRKSL</original>
    <variation>AH</variation>
    <location>
        <begin position="258"/>
        <end position="294"/>
    </location>
</feature>
<feature type="mutagenesis site" description="Abolishes phosphorylation by PLK2 and impairs centriole duplication." evidence="28">
    <original>S</original>
    <variation>A</variation>
    <location>
        <position position="4"/>
    </location>
</feature>
<feature type="mutagenesis site" description="Mimicks phosphorylation state, inducing accumulation of centrioles." evidence="28">
    <original>S</original>
    <variation>D</variation>
    <variation>E</variation>
    <location>
        <position position="4"/>
    </location>
</feature>
<feature type="mutagenesis site" description="Does not affect phosphorylation by PLK2." evidence="28">
    <original>T</original>
    <variation>A</variation>
    <location>
        <position position="95"/>
    </location>
</feature>
<feature type="mutagenesis site" description="Does not affect phosphorylation by PLK2." evidence="28">
    <original>S</original>
    <variation>A</variation>
    <location>
        <position position="125"/>
    </location>
</feature>
<feature type="mutagenesis site" description="Partial loss of phosphorylation. Does not affect phosphorylation by PLK2." evidence="7 28">
    <original>T</original>
    <variation>A</variation>
    <location>
        <position position="199"/>
    </location>
</feature>
<feature type="mutagenesis site" description="Partial loss of phosphorylation." evidence="7">
    <original>T</original>
    <variation>A</variation>
    <location>
        <position position="219"/>
    </location>
</feature>
<feature type="mutagenesis site" description="Partial loss of phosphorylation; when associated with A-237." evidence="7">
    <original>T</original>
    <variation>A</variation>
    <location>
        <position position="234"/>
    </location>
</feature>
<feature type="mutagenesis site" description="Partial loss of phosphorylation." evidence="7">
    <original>T</original>
    <variation>A</variation>
    <location>
        <position position="237"/>
    </location>
</feature>
<feature type="mutagenesis site" description="Partial destabilization of the structure." evidence="19">
    <original>K</original>
    <variation>A</variation>
    <location>
        <position position="248"/>
    </location>
</feature>
<feature type="mutagenesis site" description="Increase in the stabilization of the structure." evidence="19">
    <original>K</original>
    <variation>A</variation>
    <location>
        <position position="250"/>
    </location>
</feature>
<feature type="mutagenesis site" description="Increase in the stabilization of the structure and partial delocalization to the nucleoplasm. Complete delocalization to the nucleoplasm; when associated with A-267." evidence="18">
    <original>K</original>
    <variation>A</variation>
    <location>
        <position position="263"/>
    </location>
</feature>
<feature type="mutagenesis site" description="No change in the sumoylation level." evidence="18">
    <original>K</original>
    <variation>R</variation>
    <location>
        <position position="263"/>
    </location>
</feature>
<feature type="mutagenesis site" description="Increase in the stabilization of the structure and complete delocalization to the nucleoplasm. Complete delocalization to the nucleoplasm; when associated with A-263." evidence="19">
    <original>K</original>
    <variation>A</variation>
    <location>
        <position position="267"/>
    </location>
</feature>
<feature type="mutagenesis site" description="Complete destabilization of the structure and loss of nucleolus localization; when associated with A-276." evidence="19">
    <original>F</original>
    <variation>A</variation>
    <location>
        <position position="268"/>
    </location>
</feature>
<feature type="mutagenesis site" description="Complete destabilization of the structure and loss of nucleolus localization; when associated with A-268." evidence="19">
    <original>F</original>
    <variation>A</variation>
    <location>
        <position position="276"/>
    </location>
</feature>
<feature type="mutagenesis site" description="Complete destabilization of the structure; when associated with A-290." evidence="19">
    <original>W</original>
    <variation>A</variation>
    <location>
        <position position="288"/>
    </location>
</feature>
<feature type="mutagenesis site" description="Partial destabilization of the structure. Complete destabilization of the structure; when associated with A-288." evidence="19">
    <original>W</original>
    <variation>A</variation>
    <location>
        <position position="290"/>
    </location>
</feature>
<feature type="sequence conflict" description="In Ref. 13; AAH21983." evidence="49" ref="13">
    <original>K</original>
    <variation>E</variation>
    <location>
        <position position="80"/>
    </location>
</feature>
<feature type="sequence conflict" description="In Ref. 22; AA sequence." evidence="49" ref="22">
    <original>E</original>
    <variation>D</variation>
    <location>
        <position position="129"/>
    </location>
</feature>
<feature type="sequence conflict" description="In Ref. 6; AAW67758." evidence="49" ref="6">
    <location>
        <position position="168"/>
    </location>
</feature>
<feature type="sequence conflict" description="In Ref. 13; AAH16768." evidence="49" ref="13">
    <original>D</original>
    <variation>G</variation>
    <location>
        <position position="178"/>
    </location>
</feature>
<feature type="sequence conflict" description="In Ref. 11; BAG70175/BAG70050." evidence="49" ref="11">
    <original>D</original>
    <variation>N</variation>
    <location>
        <position position="183"/>
    </location>
</feature>
<feature type="sequence conflict" description="In Ref. 23; AAA36473/AAA36474." evidence="49" ref="23">
    <original>D</original>
    <variation>P</variation>
    <location>
        <position position="213"/>
    </location>
</feature>
<feature type="sequence conflict" description="In Ref. 21; AA sequence." evidence="49" ref="21">
    <original>S</original>
    <variation>L</variation>
    <location>
        <position position="214"/>
    </location>
</feature>
<feature type="sequence conflict" description="In Ref. 23; AAA36473." evidence="49" ref="23">
    <original>P</original>
    <variation>S</variation>
    <location>
        <position position="216"/>
    </location>
</feature>
<feature type="sequence conflict" description="In Ref. 23; AAA36473." evidence="49" ref="23">
    <original>TPR</original>
    <variation>SSS</variation>
    <location>
        <begin position="219"/>
        <end position="221"/>
    </location>
</feature>
<feature type="sequence conflict" description="In Ref. 8; AAQ24860." evidence="49" ref="8">
    <original>Q</original>
    <variation>R</variation>
    <location>
        <position position="231"/>
    </location>
</feature>
<feature type="sequence conflict" description="In Ref. 13; AAH16768." evidence="49" ref="13">
    <original>Y</original>
    <variation>C</variation>
    <location>
        <position position="271"/>
    </location>
</feature>
<feature type="sequence conflict" description="In Ref. 13; AAH12566." evidence="49" ref="13">
    <original>L</original>
    <variation>F</variation>
    <location>
        <position position="287"/>
    </location>
</feature>
<feature type="sequence conflict" description="In Ref. 6; AAW67752/AAW67755." evidence="49" ref="6">
    <original>WQWRKSL</original>
    <variation>CLAVEEVSLRK</variation>
    <location>
        <begin position="288"/>
        <end position="294"/>
    </location>
</feature>
<feature type="sequence conflict" description="In Ref. 6; AAW67753 and 7; ABC40399." evidence="49" ref="6 7">
    <original>WQWRKSL</original>
    <variation>CMAVEEVSLRK</variation>
    <location>
        <begin position="288"/>
        <end position="294"/>
    </location>
</feature>
<feature type="sequence conflict" description="In Ref. 6; AAW67754." evidence="49" ref="6">
    <original>WQWRKSL</original>
    <variation>CVAVEEVSLRK</variation>
    <location>
        <begin position="288"/>
        <end position="294"/>
    </location>
</feature>
<feature type="sequence conflict" description="In Ref. 6; AAW67756." evidence="49" ref="6">
    <original>WRKSL</original>
    <variation>SLAQVSLRK</variation>
    <location>
        <begin position="290"/>
        <end position="294"/>
    </location>
</feature>
<feature type="sequence conflict" description="In Ref. 6; AAW67757." evidence="49" ref="6">
    <original>WRKSL</original>
    <variation>SLEKVSLRK</variation>
    <location>
        <begin position="290"/>
        <end position="294"/>
    </location>
</feature>
<feature type="strand" evidence="74">
    <location>
        <begin position="15"/>
        <end position="24"/>
    </location>
</feature>
<feature type="strand" evidence="74">
    <location>
        <begin position="29"/>
        <end position="31"/>
    </location>
</feature>
<feature type="strand" evidence="74">
    <location>
        <begin position="40"/>
        <end position="49"/>
    </location>
</feature>
<feature type="strand" evidence="74">
    <location>
        <begin position="58"/>
        <end position="65"/>
    </location>
</feature>
<feature type="strand" evidence="74">
    <location>
        <begin position="71"/>
        <end position="80"/>
    </location>
</feature>
<feature type="turn" evidence="74">
    <location>
        <begin position="81"/>
        <end position="83"/>
    </location>
</feature>
<feature type="strand" evidence="74">
    <location>
        <begin position="84"/>
        <end position="94"/>
    </location>
</feature>
<feature type="strand" evidence="74">
    <location>
        <begin position="96"/>
        <end position="104"/>
    </location>
</feature>
<feature type="strand" evidence="74">
    <location>
        <begin position="109"/>
        <end position="117"/>
    </location>
</feature>
<feature type="helix" evidence="73">
    <location>
        <begin position="244"/>
        <end position="257"/>
    </location>
</feature>
<feature type="helix" evidence="73">
    <location>
        <begin position="265"/>
        <end position="275"/>
    </location>
</feature>
<feature type="helix" evidence="73">
    <location>
        <begin position="281"/>
        <end position="292"/>
    </location>
</feature>
<feature type="modified residue" description="Phosphoserine" evidence="63">
    <location sequence="P06748-3">
        <position position="254"/>
    </location>
</feature>
<feature type="modified residue" description="N6-acetyllysine" evidence="61">
    <location sequence="P06748-3">
        <position position="257"/>
    </location>
</feature>
<keyword id="KW-0002">3D-structure</keyword>
<keyword id="KW-0007">Acetylation</keyword>
<keyword id="KW-0013">ADP-ribosylation</keyword>
<keyword id="KW-0025">Alternative splicing</keyword>
<keyword id="KW-0143">Chaperone</keyword>
<keyword id="KW-0160">Chromosomal rearrangement</keyword>
<keyword id="KW-0963">Cytoplasm</keyword>
<keyword id="KW-0206">Cytoskeleton</keyword>
<keyword id="KW-0903">Direct protein sequencing</keyword>
<keyword id="KW-1015">Disulfide bond</keyword>
<keyword id="KW-0945">Host-virus interaction</keyword>
<keyword id="KW-1017">Isopeptide bond</keyword>
<keyword id="KW-0539">Nucleus</keyword>
<keyword id="KW-0597">Phosphoprotein</keyword>
<keyword id="KW-1267">Proteomics identification</keyword>
<keyword id="KW-0656">Proto-oncogene</keyword>
<keyword id="KW-1185">Reference proteome</keyword>
<keyword id="KW-0694">RNA-binding</keyword>
<keyword id="KW-0832">Ubl conjugation</keyword>
<gene>
    <name evidence="51" type="primary">NPM1</name>
    <name type="synonym">NPM</name>
</gene>
<accession>P06748</accession>
<accession>A8K3N7</accession>
<accession>B5BU00</accession>
<accession>D3DQL6</accession>
<accession>P08693</accession>
<accession>Q12826</accession>
<accession>Q13440</accession>
<accession>Q13441</accession>
<accession>Q14115</accession>
<accession>Q5EU94</accession>
<accession>Q5EU95</accession>
<accession>Q5EU96</accession>
<accession>Q5EU97</accession>
<accession>Q5EU98</accession>
<accession>Q5EU99</accession>
<accession>Q6V962</accession>
<accession>Q8WTW5</accession>
<accession>Q96AT6</accession>
<accession>Q96DC4</accession>
<accession>Q96EA5</accession>
<accession>Q9BYG9</accession>
<accession>Q9UDJ7</accession>
<reference key="1">
    <citation type="journal article" date="1989" name="Biochemistry">
        <title>Characterization of the cDNA encoding human nucleophosmin and studies of its role in normal and abnormal growth.</title>
        <authorList>
            <person name="Chan W.-Y."/>
            <person name="Liu Q.R."/>
            <person name="Borjigin J."/>
            <person name="Busch H."/>
            <person name="Rennert O.M."/>
            <person name="Tease L.A."/>
            <person name="Chan P.-K."/>
        </authorList>
    </citation>
    <scope>NUCLEOTIDE SEQUENCE [MRNA] (ISOFORM 1)</scope>
    <source>
        <tissue>Placenta</tissue>
    </source>
</reference>
<reference key="2">
    <citation type="journal article" date="1989" name="Biochem. Biophys. Res. Commun.">
        <title>The nucleotide sequence of a human cDNA encoding the highly conserved nucleolar phosphoprotein B23.</title>
        <authorList>
            <person name="Li X."/>
            <person name="McNeilage L.J."/>
            <person name="Whittingham S."/>
        </authorList>
    </citation>
    <scope>NUCLEOTIDE SEQUENCE [MRNA] (ISOFORM 1)</scope>
    <source>
        <tissue>B-cell lymphoma</tissue>
    </source>
</reference>
<reference key="3">
    <citation type="journal article" date="1989" name="Biochem. Biophys. Res. Commun.">
        <title>Isolation and characterization of a molecular cDNA clone of a human mRNA from interferon-treated cells encoding nucleolar protein B23, numatrin.</title>
        <authorList>
            <person name="Zhang X.T."/>
            <person name="Thomis D.C."/>
            <person name="Samuel C.E."/>
        </authorList>
    </citation>
    <scope>NUCLEOTIDE SEQUENCE [MRNA] (ISOFORM 1)</scope>
    <source>
        <tissue>Amnion</tissue>
    </source>
</reference>
<reference key="4">
    <citation type="journal article" date="1997" name="Nucleic Acids Res.">
        <title>Isolation and characterization of the human nucleophosmin/B23 (NPM) gene: identification of the YY1 binding site at the 5' enhancer region.</title>
        <authorList>
            <person name="Chan P.-K."/>
            <person name="Chan F.Y."/>
            <person name="Morris S.W."/>
            <person name="Xie Z."/>
        </authorList>
    </citation>
    <scope>NUCLEOTIDE SEQUENCE [GENOMIC DNA] (ISOFORM 1)</scope>
</reference>
<reference key="5">
    <citation type="submission" date="2000-04" db="EMBL/GenBank/DDBJ databases">
        <title>Human homologue of Rat B23.2.</title>
        <authorList>
            <person name="Okuwaki M."/>
            <person name="Nagata K."/>
        </authorList>
    </citation>
    <scope>NUCLEOTIDE SEQUENCE [MRNA] (ISOFORM 3)</scope>
</reference>
<reference key="6">
    <citation type="journal article" date="2005" name="N. Engl. J. Med.">
        <title>Cytoplasmic nucleophosmin in acute myelogenous leukemia with a normal karyotype.</title>
        <authorList>
            <person name="Falini B."/>
            <person name="Mecucci C."/>
            <person name="Tiacci E."/>
            <person name="Alcalay M."/>
            <person name="Rosati R."/>
            <person name="Pasqualucci L."/>
            <person name="La Starza R."/>
            <person name="Diverio D."/>
            <person name="Colombo E."/>
            <person name="Santucci A."/>
            <person name="Bigerna B."/>
            <person name="Pacini R."/>
            <person name="Pucciarini A."/>
            <person name="Liso A."/>
            <person name="Vignetti M."/>
            <person name="Fazi P."/>
            <person name="Meani N."/>
            <person name="Pettirossi V."/>
            <person name="Saglio G."/>
            <person name="Mandelli F."/>
            <person name="Lo-Coco F."/>
            <person name="Pelicci P.-G."/>
            <person name="Martelli M.F."/>
        </authorList>
    </citation>
    <scope>NUCLEOTIDE SEQUENCE [MRNA] (ISOFORM 1)</scope>
    <scope>SUBCELLULAR LOCATION</scope>
    <scope>INVOLVEMENT IN ACUTE MYELOGENOUS LEUKEMIA</scope>
    <source>
        <tissue>Bone marrow</tissue>
    </source>
</reference>
<reference key="7">
    <citation type="journal article" date="2006" name="Lancet Oncol.">
        <title>Cytoplasmic nucleophosmin in myeloid sarcoma occurring 20 years after diagnosis of acute myeloid leukaemia.</title>
        <authorList>
            <person name="Bolli N."/>
            <person name="Galimberti S."/>
            <person name="Martelli M.P."/>
            <person name="Tabarrini A."/>
            <person name="Roti G."/>
            <person name="Mecucci C."/>
            <person name="Martelli M.F."/>
            <person name="Petrini M."/>
            <person name="Falini B."/>
        </authorList>
    </citation>
    <scope>NUCLEOTIDE SEQUENCE [MRNA] (ISOFORM 1)</scope>
</reference>
<reference key="8">
    <citation type="submission" date="2003-07" db="EMBL/GenBank/DDBJ databases">
        <title>Cloning of a new transcript of nucleophosmin in testis.</title>
        <authorList>
            <person name="Lu L."/>
            <person name="Huang X.Y."/>
            <person name="Yin L.L."/>
            <person name="Xu M."/>
            <person name="Li J.M."/>
            <person name="Zhou Z.M."/>
            <person name="Sha J.H."/>
        </authorList>
    </citation>
    <scope>NUCLEOTIDE SEQUENCE [MRNA] (ISOFORM 1)</scope>
    <source>
        <tissue>Testis</tissue>
    </source>
</reference>
<reference key="9">
    <citation type="submission" date="2003-05" db="EMBL/GenBank/DDBJ databases">
        <title>Cloning of human full-length CDSs in BD Creator(TM) system donor vector.</title>
        <authorList>
            <person name="Kalnine N."/>
            <person name="Chen X."/>
            <person name="Rolfs A."/>
            <person name="Halleck A."/>
            <person name="Hines L."/>
            <person name="Eisenstein S."/>
            <person name="Koundinya M."/>
            <person name="Raphael J."/>
            <person name="Moreira D."/>
            <person name="Kelley T."/>
            <person name="LaBaer J."/>
            <person name="Lin Y."/>
            <person name="Phelan M."/>
            <person name="Farmer A."/>
        </authorList>
    </citation>
    <scope>NUCLEOTIDE SEQUENCE [LARGE SCALE MRNA] (ISOFORM 1)</scope>
</reference>
<reference key="10">
    <citation type="journal article" date="2004" name="Nat. Genet.">
        <title>Complete sequencing and characterization of 21,243 full-length human cDNAs.</title>
        <authorList>
            <person name="Ota T."/>
            <person name="Suzuki Y."/>
            <person name="Nishikawa T."/>
            <person name="Otsuki T."/>
            <person name="Sugiyama T."/>
            <person name="Irie R."/>
            <person name="Wakamatsu A."/>
            <person name="Hayashi K."/>
            <person name="Sato H."/>
            <person name="Nagai K."/>
            <person name="Kimura K."/>
            <person name="Makita H."/>
            <person name="Sekine M."/>
            <person name="Obayashi M."/>
            <person name="Nishi T."/>
            <person name="Shibahara T."/>
            <person name="Tanaka T."/>
            <person name="Ishii S."/>
            <person name="Yamamoto J."/>
            <person name="Saito K."/>
            <person name="Kawai Y."/>
            <person name="Isono Y."/>
            <person name="Nakamura Y."/>
            <person name="Nagahari K."/>
            <person name="Murakami K."/>
            <person name="Yasuda T."/>
            <person name="Iwayanagi T."/>
            <person name="Wagatsuma M."/>
            <person name="Shiratori A."/>
            <person name="Sudo H."/>
            <person name="Hosoiri T."/>
            <person name="Kaku Y."/>
            <person name="Kodaira H."/>
            <person name="Kondo H."/>
            <person name="Sugawara M."/>
            <person name="Takahashi M."/>
            <person name="Kanda K."/>
            <person name="Yokoi T."/>
            <person name="Furuya T."/>
            <person name="Kikkawa E."/>
            <person name="Omura Y."/>
            <person name="Abe K."/>
            <person name="Kamihara K."/>
            <person name="Katsuta N."/>
            <person name="Sato K."/>
            <person name="Tanikawa M."/>
            <person name="Yamazaki M."/>
            <person name="Ninomiya K."/>
            <person name="Ishibashi T."/>
            <person name="Yamashita H."/>
            <person name="Murakawa K."/>
            <person name="Fujimori K."/>
            <person name="Tanai H."/>
            <person name="Kimata M."/>
            <person name="Watanabe M."/>
            <person name="Hiraoka S."/>
            <person name="Chiba Y."/>
            <person name="Ishida S."/>
            <person name="Ono Y."/>
            <person name="Takiguchi S."/>
            <person name="Watanabe S."/>
            <person name="Yosida M."/>
            <person name="Hotuta T."/>
            <person name="Kusano J."/>
            <person name="Kanehori K."/>
            <person name="Takahashi-Fujii A."/>
            <person name="Hara H."/>
            <person name="Tanase T.-O."/>
            <person name="Nomura Y."/>
            <person name="Togiya S."/>
            <person name="Komai F."/>
            <person name="Hara R."/>
            <person name="Takeuchi K."/>
            <person name="Arita M."/>
            <person name="Imose N."/>
            <person name="Musashino K."/>
            <person name="Yuuki H."/>
            <person name="Oshima A."/>
            <person name="Sasaki N."/>
            <person name="Aotsuka S."/>
            <person name="Yoshikawa Y."/>
            <person name="Matsunawa H."/>
            <person name="Ichihara T."/>
            <person name="Shiohata N."/>
            <person name="Sano S."/>
            <person name="Moriya S."/>
            <person name="Momiyama H."/>
            <person name="Satoh N."/>
            <person name="Takami S."/>
            <person name="Terashima Y."/>
            <person name="Suzuki O."/>
            <person name="Nakagawa S."/>
            <person name="Senoh A."/>
            <person name="Mizoguchi H."/>
            <person name="Goto Y."/>
            <person name="Shimizu F."/>
            <person name="Wakebe H."/>
            <person name="Hishigaki H."/>
            <person name="Watanabe T."/>
            <person name="Sugiyama A."/>
            <person name="Takemoto M."/>
            <person name="Kawakami B."/>
            <person name="Yamazaki M."/>
            <person name="Watanabe K."/>
            <person name="Kumagai A."/>
            <person name="Itakura S."/>
            <person name="Fukuzumi Y."/>
            <person name="Fujimori Y."/>
            <person name="Komiyama M."/>
            <person name="Tashiro H."/>
            <person name="Tanigami A."/>
            <person name="Fujiwara T."/>
            <person name="Ono T."/>
            <person name="Yamada K."/>
            <person name="Fujii Y."/>
            <person name="Ozaki K."/>
            <person name="Hirao M."/>
            <person name="Ohmori Y."/>
            <person name="Kawabata A."/>
            <person name="Hikiji T."/>
            <person name="Kobatake N."/>
            <person name="Inagaki H."/>
            <person name="Ikema Y."/>
            <person name="Okamoto S."/>
            <person name="Okitani R."/>
            <person name="Kawakami T."/>
            <person name="Noguchi S."/>
            <person name="Itoh T."/>
            <person name="Shigeta K."/>
            <person name="Senba T."/>
            <person name="Matsumura K."/>
            <person name="Nakajima Y."/>
            <person name="Mizuno T."/>
            <person name="Morinaga M."/>
            <person name="Sasaki M."/>
            <person name="Togashi T."/>
            <person name="Oyama M."/>
            <person name="Hata H."/>
            <person name="Watanabe M."/>
            <person name="Komatsu T."/>
            <person name="Mizushima-Sugano J."/>
            <person name="Satoh T."/>
            <person name="Shirai Y."/>
            <person name="Takahashi Y."/>
            <person name="Nakagawa K."/>
            <person name="Okumura K."/>
            <person name="Nagase T."/>
            <person name="Nomura N."/>
            <person name="Kikuchi H."/>
            <person name="Masuho Y."/>
            <person name="Yamashita R."/>
            <person name="Nakai K."/>
            <person name="Yada T."/>
            <person name="Nakamura Y."/>
            <person name="Ohara O."/>
            <person name="Isogai T."/>
            <person name="Sugano S."/>
        </authorList>
    </citation>
    <scope>NUCLEOTIDE SEQUENCE [LARGE SCALE MRNA] (ISOFORM 1)</scope>
    <source>
        <tissue>Embryo</tissue>
    </source>
</reference>
<reference key="11">
    <citation type="journal article" date="2008" name="Nat. Methods">
        <title>Human protein factory for converting the transcriptome into an in vitro-expressed proteome.</title>
        <authorList>
            <person name="Goshima N."/>
            <person name="Kawamura Y."/>
            <person name="Fukumoto A."/>
            <person name="Miura A."/>
            <person name="Honma R."/>
            <person name="Satoh R."/>
            <person name="Wakamatsu A."/>
            <person name="Yamamoto J."/>
            <person name="Kimura K."/>
            <person name="Nishikawa T."/>
            <person name="Andoh T."/>
            <person name="Iida Y."/>
            <person name="Ishikawa K."/>
            <person name="Ito E."/>
            <person name="Kagawa N."/>
            <person name="Kaminaga C."/>
            <person name="Kanehori K."/>
            <person name="Kawakami B."/>
            <person name="Kenmochi K."/>
            <person name="Kimura R."/>
            <person name="Kobayashi M."/>
            <person name="Kuroita T."/>
            <person name="Kuwayama H."/>
            <person name="Maruyama Y."/>
            <person name="Matsuo K."/>
            <person name="Minami K."/>
            <person name="Mitsubori M."/>
            <person name="Mori M."/>
            <person name="Morishita R."/>
            <person name="Murase A."/>
            <person name="Nishikawa A."/>
            <person name="Nishikawa S."/>
            <person name="Okamoto T."/>
            <person name="Sakagami N."/>
            <person name="Sakamoto Y."/>
            <person name="Sasaki Y."/>
            <person name="Seki T."/>
            <person name="Sono S."/>
            <person name="Sugiyama A."/>
            <person name="Sumiya T."/>
            <person name="Takayama T."/>
            <person name="Takayama Y."/>
            <person name="Takeda H."/>
            <person name="Togashi T."/>
            <person name="Yahata K."/>
            <person name="Yamada H."/>
            <person name="Yanagisawa Y."/>
            <person name="Endo Y."/>
            <person name="Imamoto F."/>
            <person name="Kisu Y."/>
            <person name="Tanaka S."/>
            <person name="Isogai T."/>
            <person name="Imai J."/>
            <person name="Watanabe S."/>
            <person name="Nomura N."/>
        </authorList>
    </citation>
    <scope>NUCLEOTIDE SEQUENCE [LARGE SCALE MRNA] (ISOFORM 1)</scope>
</reference>
<reference key="12">
    <citation type="submission" date="2005-09" db="EMBL/GenBank/DDBJ databases">
        <authorList>
            <person name="Mural R.J."/>
            <person name="Istrail S."/>
            <person name="Sutton G.G."/>
            <person name="Florea L."/>
            <person name="Halpern A.L."/>
            <person name="Mobarry C.M."/>
            <person name="Lippert R."/>
            <person name="Walenz B."/>
            <person name="Shatkay H."/>
            <person name="Dew I."/>
            <person name="Miller J.R."/>
            <person name="Flanigan M.J."/>
            <person name="Edwards N.J."/>
            <person name="Bolanos R."/>
            <person name="Fasulo D."/>
            <person name="Halldorsson B.V."/>
            <person name="Hannenhalli S."/>
            <person name="Turner R."/>
            <person name="Yooseph S."/>
            <person name="Lu F."/>
            <person name="Nusskern D.R."/>
            <person name="Shue B.C."/>
            <person name="Zheng X.H."/>
            <person name="Zhong F."/>
            <person name="Delcher A.L."/>
            <person name="Huson D.H."/>
            <person name="Kravitz S.A."/>
            <person name="Mouchard L."/>
            <person name="Reinert K."/>
            <person name="Remington K.A."/>
            <person name="Clark A.G."/>
            <person name="Waterman M.S."/>
            <person name="Eichler E.E."/>
            <person name="Adams M.D."/>
            <person name="Hunkapiller M.W."/>
            <person name="Myers E.W."/>
            <person name="Venter J.C."/>
        </authorList>
    </citation>
    <scope>NUCLEOTIDE SEQUENCE [LARGE SCALE GENOMIC DNA]</scope>
</reference>
<reference key="13">
    <citation type="journal article" date="2004" name="Genome Res.">
        <title>The status, quality, and expansion of the NIH full-length cDNA project: the Mammalian Gene Collection (MGC).</title>
        <authorList>
            <consortium name="The MGC Project Team"/>
        </authorList>
    </citation>
    <scope>NUCLEOTIDE SEQUENCE [LARGE SCALE MRNA] (ISOFORMS 1; 2 AND 3)</scope>
    <source>
        <tissue>Bone marrow</tissue>
        <tissue>Brain</tissue>
        <tissue>Kidney</tissue>
        <tissue>Lung</tissue>
        <tissue>Prostate</tissue>
        <tissue>Testis</tissue>
        <tissue>Urinary bladder</tissue>
    </source>
</reference>
<reference key="14">
    <citation type="journal article" date="1996" name="Blood">
        <title>The t(5;17) variant of acute promyelocytic leukemia expresses a nucleophosmin-retinoic acid receptor fusion.</title>
        <authorList>
            <person name="Redner R.L."/>
            <person name="Rush E.A."/>
            <person name="Faas S."/>
            <person name="Rudert W.A."/>
            <person name="Corey S.J."/>
        </authorList>
    </citation>
    <scope>NUCLEOTIDE SEQUENCE [MRNA] OF 1-133</scope>
    <scope>CHROMOSOMAL TRANSLOCATION WITH RARA</scope>
    <source>
        <tissue>Bone marrow</tissue>
    </source>
</reference>
<reference key="15">
    <citation type="journal article" date="1994" name="Science">
        <title>Fusion of a kinase gene, ALK, to a nucleolar protein gene, NPM, in non-Hodgkin's lymphoma.</title>
        <authorList>
            <person name="Morris S.W."/>
            <person name="Kirstein M.N."/>
            <person name="Valentine M.B."/>
            <person name="Dittmer K.G."/>
            <person name="Shapiro D.N."/>
            <person name="Saltman D.L."/>
            <person name="Look A.T."/>
        </authorList>
    </citation>
    <scope>NUCLEOTIDE SEQUENCE [MRNA] OF 1-117</scope>
    <scope>CHROMOSOMAL TRANSLOCATION WITH ALK</scope>
    <source>
        <tissue>T-cell lymphoma</tissue>
    </source>
</reference>
<reference key="16">
    <citation type="journal article" date="1996" name="Proc. Natl. Acad. Sci. U.S.A.">
        <title>Characterization of the transforming activity of p80, a hyperphosphorylated protein in a Ki-1 lymphoma cell line with chromosomal translocation t(2;5).</title>
        <authorList>
            <person name="Fujimoto J."/>
            <person name="Shiota M."/>
            <person name="Iwahara T."/>
            <person name="Seki N."/>
            <person name="Satoh H."/>
            <person name="Mori S."/>
            <person name="Yamamoto T."/>
        </authorList>
    </citation>
    <scope>NUCLEOTIDE SEQUENCE [MRNA] OF 1-117</scope>
    <scope>CHROMOSOMAL TRANSLOCATION WITH ALK</scope>
    <source>
        <tissue>Lymphoma</tissue>
    </source>
</reference>
<reference key="17">
    <citation type="submission" date="2009-03" db="UniProtKB">
        <authorList>
            <person name="Bienvenut W.V."/>
            <person name="Waridel P."/>
            <person name="Quadroni M."/>
        </authorList>
    </citation>
    <scope>PROTEIN SEQUENCE OF 1-24; 33-101; 104-141; 240-248 AND 278-291</scope>
    <scope>ACETYLATION AT MET-1</scope>
    <scope>PHOSPHORYLATION AT SER-125</scope>
    <scope>IDENTIFICATION BY MASS SPECTROMETRY</scope>
    <source>
        <tissue>Cervix carcinoma</tissue>
    </source>
</reference>
<reference key="18">
    <citation type="journal article" date="1989" name="Nucleic Acids Res.">
        <title>Nucleotide sequence of a cDNA clone representing a third allele of human protein B23.</title>
        <authorList>
            <person name="Hale T.K."/>
            <person name="Mansfield B.C."/>
        </authorList>
    </citation>
    <scope>NUCLEOTIDE SEQUENCE [MRNA] OF 15-294 (ISOFORM 1)</scope>
    <source>
        <tissue>Placenta</tissue>
    </source>
</reference>
<reference key="19">
    <citation type="journal article" date="1997" name="Electrophoresis">
        <title>A two-dimensional gel database of human colon carcinoma proteins.</title>
        <authorList>
            <person name="Ji H."/>
            <person name="Reid G.E."/>
            <person name="Moritz R.L."/>
            <person name="Eddes J.S."/>
            <person name="Burgess A.W."/>
            <person name="Simpson R.J."/>
        </authorList>
    </citation>
    <scope>PROTEIN SEQUENCE OF 33-54</scope>
    <source>
        <tissue>Colon carcinoma</tissue>
    </source>
</reference>
<reference key="20">
    <citation type="journal article" date="1993" name="J. Biol. Chem.">
        <title>Nucleolar targeting signal of Rex protein of human T-cell leukemia virus type I specifically binds to nucleolar shuttle protein B-23.</title>
        <authorList>
            <person name="Adachi Y."/>
            <person name="Copeland T.D."/>
            <person name="Hatanaka M."/>
            <person name="Oroszlan S."/>
        </authorList>
    </citation>
    <scope>PROTEIN SEQUENCE OF 34-42; 50-67; 137-151; 218-227; 252-266 AND 277-286 (ISOFORM 1)</scope>
    <scope>INTERACTION WITH HTLV1 REX PROTEIN (MICROBIAL INFECTION)</scope>
</reference>
<reference key="21">
    <citation type="journal article" date="2003" name="J. Biol. Chem.">
        <title>Nucleophosmin interacts with and inhibits the catalytic function of eukaryotic initiation factor 2 kinase PKR.</title>
        <authorList>
            <person name="Pang Q."/>
            <person name="Christianson T.A."/>
            <person name="Koretsky T."/>
            <person name="Carlson H."/>
            <person name="David L."/>
            <person name="Keeble W."/>
            <person name="Faulkner G.R."/>
            <person name="Speckhart A."/>
            <person name="Bagby G.C."/>
        </authorList>
    </citation>
    <scope>PROTEIN SEQUENCE OF 33-42; 213-221; 251-257 AND 268-274</scope>
    <scope>FUNCTION</scope>
    <scope>INTERACTION WITH EIF2AK2</scope>
    <scope>PHOSPHORYLATION</scope>
</reference>
<reference key="22">
    <citation type="journal article" date="1986" name="J. Biol. Chem.">
        <title>Amino acid sequence of protein B23 phosphorylation site.</title>
        <authorList>
            <person name="Chan P.-K."/>
            <person name="Aldrich M.B."/>
            <person name="Cook R.G."/>
            <person name="Busch H."/>
        </authorList>
    </citation>
    <scope>PROTEIN SEQUENCE OF 115-134</scope>
</reference>
<reference key="23">
    <citation type="journal article" date="1986" name="J. Biol. Chem.">
        <title>Amino acid sequence of a specific antigenic peptide of protein B23.</title>
        <authorList>
            <person name="Chan P.-K."/>
            <person name="Chan W.-Y."/>
            <person name="Yung B.Y.M."/>
            <person name="Cook R.G."/>
            <person name="Aldrich M.B."/>
            <person name="Ku D."/>
            <person name="Goldknopf I.L."/>
            <person name="Busch H."/>
        </authorList>
    </citation>
    <scope>NUCLEOTIDE SEQUENCE [MRNA] OF 213-294 (ISOFORM 1)</scope>
    <scope>PROTEIN SEQUENCE OF 227-294</scope>
</reference>
<reference key="24">
    <citation type="journal article" date="1994" name="J. Biol. Chem.">
        <title>Identification of the nuclear and nucleolar localization signals of the protein p120. Interaction with translocation protein B23.</title>
        <authorList>
            <person name="Valdez B.C."/>
            <person name="Perlaky L."/>
            <person name="Henning D."/>
            <person name="Saijo Y."/>
            <person name="Chan P.K."/>
            <person name="Busch H."/>
        </authorList>
    </citation>
    <scope>INTERACTION WITH NOP2</scope>
</reference>
<reference key="25">
    <citation type="journal article" date="1995" name="Radiat. Res.">
        <title>Modification of nucleolar protein B23 after exposure to ionizing radiation.</title>
        <authorList>
            <person name="Ramsamooj P."/>
            <person name="Notario V."/>
            <person name="Dritschilo A."/>
        </authorList>
    </citation>
    <scope>ADP-RIBOSYLATION</scope>
</reference>
<reference key="26">
    <citation type="journal article" date="1996" name="Oncogene">
        <title>The t(3;5)(q25.1;q34) of myelodysplastic syndrome and acute myeloid leukemia produces a novel fusion gene, NPM-MLF1.</title>
        <authorList>
            <person name="Yoneda-Kato N."/>
            <person name="Look A.T."/>
            <person name="Kirstein M.N."/>
            <person name="Valentine M.B."/>
            <person name="Raimondi S.C."/>
            <person name="Cohen K.J."/>
            <person name="Carroll A.J."/>
            <person name="Morris S.W."/>
        </authorList>
    </citation>
    <scope>CHROMOSOMAL TRANSLOCATION WITH MLF1</scope>
</reference>
<reference key="27">
    <citation type="journal article" date="2000" name="Cell">
        <title>Nucleophosmin/B23 is a target of CDK2/cyclin E in centrosome duplication.</title>
        <authorList>
            <person name="Okuda M."/>
            <person name="Horn H.F."/>
            <person name="Tarapore P."/>
            <person name="Tokuyama Y."/>
            <person name="Smulian A.G."/>
            <person name="Chan P.K."/>
            <person name="Knudsen E.S."/>
            <person name="Hofmann I.A."/>
            <person name="Snyder J.D."/>
            <person name="Bove K.E."/>
            <person name="Fukasawa K."/>
        </authorList>
    </citation>
    <scope>PHOSPHORYLATION BY CDK2</scope>
</reference>
<reference key="28">
    <citation type="journal article" date="2001" name="J. Biol. Chem.">
        <title>The nucleolar phosphoprotein B23 interacts with hepatitis delta antigens and modulates the hepatitis delta virus RNA replication.</title>
        <authorList>
            <person name="Huang W.H."/>
            <person name="Yung B.Y."/>
            <person name="Syu W.J."/>
            <person name="Lee Y.H."/>
        </authorList>
    </citation>
    <scope>INTERACTION WITH HEPATITIS DELTA VIRUS S-HDAG (MICROBIAL INFECTION)</scope>
</reference>
<reference key="29">
    <citation type="journal article" date="2002" name="Mol. Biol. Cell">
        <title>The RNA binding activity of a ribosome biogenesis factor, nucleophosmin/B23, is modulated by phosphorylation with a cell cycle-dependent kinase and by association with its subtype.</title>
        <authorList>
            <person name="Okuwaki M."/>
            <person name="Tsujimoto M."/>
            <person name="Nagata K."/>
        </authorList>
    </citation>
    <scope>PHOSPHORYLATION AT THR-199; THR-219 AND THR-237</scope>
    <scope>MUTAGENESIS OF THR-199; THR-219; THR-234 AND THR-237</scope>
</reference>
<reference key="30">
    <citation type="journal article" date="2002" name="Mol. Biol. Cell">
        <title>Functional proteomic analysis of human nucleolus.</title>
        <authorList>
            <person name="Scherl A."/>
            <person name="Coute Y."/>
            <person name="Deon C."/>
            <person name="Calle A."/>
            <person name="Kindbeiter K."/>
            <person name="Sanchez J.-C."/>
            <person name="Greco A."/>
            <person name="Hochstrasser D.F."/>
            <person name="Diaz J.-J."/>
        </authorList>
    </citation>
    <scope>SUBCELLULAR LOCATION [LARGE SCALE ANALYSIS]</scope>
    <source>
        <tissue>Cervix carcinoma</tissue>
    </source>
</reference>
<reference key="31">
    <citation type="journal article" date="2002" name="Oncogene">
        <title>The role of nucleophosmin in centrosome duplication.</title>
        <authorList>
            <person name="Okuda M."/>
        </authorList>
    </citation>
    <scope>REVIEW</scope>
</reference>
<reference key="32">
    <citation type="journal article" date="2003" name="Nature">
        <title>Proteomic characterization of the human centrosome by protein correlation profiling.</title>
        <authorList>
            <person name="Andersen J.S."/>
            <person name="Wilkinson C.J."/>
            <person name="Mayor T."/>
            <person name="Mortensen P."/>
            <person name="Nigg E.A."/>
            <person name="Mann M."/>
        </authorList>
    </citation>
    <scope>IDENTIFICATION BY MASS SPECTROMETRY</scope>
    <scope>SUBCELLULAR LOCATION [LARGE SCALE ANALYSIS]</scope>
    <source>
        <tissue>Lymphoblast</tissue>
    </source>
</reference>
<reference key="33">
    <citation type="journal article" date="2004" name="FEBS Lett.">
        <title>Nek2A kinase regulates the localization of numatrin to centrosome in mitosis.</title>
        <authorList>
            <person name="Yao J."/>
            <person name="Fu C."/>
            <person name="Ding X."/>
            <person name="Guo Z."/>
            <person name="Zenreski A."/>
            <person name="Chen Y."/>
            <person name="Ahmed K."/>
            <person name="Liao J."/>
            <person name="Dou Z."/>
            <person name="Yao X."/>
        </authorList>
    </citation>
    <scope>SUBCELLULAR LOCATION</scope>
    <scope>PHOSPHORYLATION</scope>
    <scope>INTERACTION WITH NEK2</scope>
</reference>
<reference key="34">
    <citation type="journal article" date="2004" name="J. Biol. Chem.">
        <title>B23/nucleophosmin serine 4 phosphorylation mediates mitotic functions of polo-like kinase 1.</title>
        <authorList>
            <person name="Zhang H."/>
            <person name="Shi X."/>
            <person name="Paddon H."/>
            <person name="Hampong M."/>
            <person name="Dai W."/>
            <person name="Pelech S."/>
        </authorList>
    </citation>
    <scope>PHOSPHORYLATION AT SER-4 BY PLK1</scope>
</reference>
<reference key="35">
    <citation type="journal article" date="2005" name="Hum. Mol. Genet.">
        <title>RPGR ORF15 isoform co-localizes with RPGRIP1 at centrioles and basal bodies and interacts with nucleophosmin.</title>
        <authorList>
            <person name="Shu X."/>
            <person name="Fry A.M."/>
            <person name="Tulloch B."/>
            <person name="Manson F.D."/>
            <person name="Crabb J.W."/>
            <person name="Khanna H."/>
            <person name="Faragher A.J."/>
            <person name="Lennon A."/>
            <person name="He S."/>
            <person name="Trojan P."/>
            <person name="Giessl A."/>
            <person name="Wolfrum U."/>
            <person name="Vervoort R."/>
            <person name="Swaroop A."/>
            <person name="Wright A.F."/>
        </authorList>
    </citation>
    <scope>INTERACTION WITH RPGR</scope>
</reference>
<reference key="36">
    <citation type="journal article" date="2005" name="Mol. Cell. Biol.">
        <title>Human histone chaperone nucleophosmin enhances acetylation-dependent chromatin transcription.</title>
        <authorList>
            <person name="Swaminathan V."/>
            <person name="Kishore A.H."/>
            <person name="Febitha K.K."/>
            <person name="Kundu T.K."/>
        </authorList>
    </citation>
    <scope>ACETYLATION AT LYS-212; LYS-229; LYS-230; LYS-250; LYS-257 AND LYS-292</scope>
    <scope>FUNCTION AS A CHAPERONE</scope>
</reference>
<reference key="37">
    <citation type="journal article" date="2005" name="Proc. Natl. Acad. Sci. U.S.A.">
        <title>Sumoylation induced by the Arf tumor suppressor: a p53-independent function.</title>
        <authorList>
            <person name="Tago K."/>
            <person name="Chiocca S."/>
            <person name="Sherr C.J."/>
        </authorList>
    </citation>
    <scope>SUMOYLATION AT LYS-230 AND LYS-263</scope>
</reference>
<reference key="38">
    <citation type="journal article" date="2006" name="Cell">
        <title>Global, in vivo, and site-specific phosphorylation dynamics in signaling networks.</title>
        <authorList>
            <person name="Olsen J.V."/>
            <person name="Blagoev B."/>
            <person name="Gnad F."/>
            <person name="Macek B."/>
            <person name="Kumar C."/>
            <person name="Mortensen P."/>
            <person name="Mann M."/>
        </authorList>
    </citation>
    <scope>PHOSPHORYLATION [LARGE SCALE ANALYSIS] AT SER-70 AND THR-95</scope>
    <scope>IDENTIFICATION BY MASS SPECTROMETRY [LARGE SCALE ANALYSIS]</scope>
    <source>
        <tissue>Cervix carcinoma</tissue>
    </source>
</reference>
<reference key="39">
    <citation type="journal article" date="2006" name="Mol. Cell">
        <title>Substrate and functional diversity of lysine acetylation revealed by a proteomics survey.</title>
        <authorList>
            <person name="Kim S.C."/>
            <person name="Sprung R."/>
            <person name="Chen Y."/>
            <person name="Xu Y."/>
            <person name="Ball H."/>
            <person name="Pei J."/>
            <person name="Cheng T."/>
            <person name="Kho Y."/>
            <person name="Xiao H."/>
            <person name="Xiao L."/>
            <person name="Grishin N.V."/>
            <person name="White M."/>
            <person name="Yang X.-J."/>
            <person name="Zhao Y."/>
        </authorList>
    </citation>
    <scope>ACETYLATION [LARGE SCALE ANALYSIS] AT LYS-150; LYS-154 AND LYS-212</scope>
    <scope>IDENTIFICATION BY MASS SPECTROMETRY [LARGE SCALE ANALYSIS]</scope>
    <source>
        <tissue>Cervix carcinoma</tissue>
    </source>
</reference>
<reference key="40">
    <citation type="journal article" date="2006" name="Mol. Cell. Biol.">
        <title>Interaction between ROCK II and nucleophosmin/B23 in the regulation of centrosome duplication.</title>
        <authorList>
            <person name="Ma Z."/>
            <person name="Kanai M."/>
            <person name="Kawamura K."/>
            <person name="Kaibuchi K."/>
            <person name="Ye K."/>
            <person name="Fukasawa K."/>
        </authorList>
    </citation>
    <scope>FUNCTION</scope>
    <scope>INTERACTION WITH ROCK2</scope>
</reference>
<reference key="41">
    <citation type="journal article" date="2007" name="J. Proteome Res.">
        <title>Improved titanium dioxide enrichment of phosphopeptides from HeLa cells and high confident phosphopeptide identification by cross-validation of MS/MS and MS/MS/MS spectra.</title>
        <authorList>
            <person name="Yu L.R."/>
            <person name="Zhu Z."/>
            <person name="Chan K.C."/>
            <person name="Issaq H.J."/>
            <person name="Dimitrov D.S."/>
            <person name="Veenstra T.D."/>
        </authorList>
    </citation>
    <scope>PHOSPHORYLATION [LARGE SCALE ANALYSIS] AT SER-70; THR-199 AND SER-254</scope>
    <scope>IDENTIFICATION BY MASS SPECTROMETRY [LARGE SCALE ANALYSIS]</scope>
    <source>
        <tissue>Cervix carcinoma</tissue>
    </source>
</reference>
<reference key="42">
    <citation type="journal article" date="2007" name="Mol. Biol. Cell">
        <title>Aurora-B regulates RNA methyltransferase NSUN2.</title>
        <authorList>
            <person name="Sakita-Suto S."/>
            <person name="Kanda A."/>
            <person name="Suzuki F."/>
            <person name="Sato S."/>
            <person name="Takata T."/>
            <person name="Tatsuka M."/>
        </authorList>
    </citation>
    <scope>INTERACTION WITH NSUN2</scope>
</reference>
<reference key="43">
    <citation type="journal article" date="2008" name="EMBO Rep.">
        <title>The nucleolar SUMO-specific protease SENP3 reverses SUMO modification of nucleophosmin and is required for rRNA processing.</title>
        <authorList>
            <person name="Haindl M."/>
            <person name="Harasim T."/>
            <person name="Eick D."/>
            <person name="Muller S."/>
        </authorList>
    </citation>
    <scope>INTERACTION WITH SENP3</scope>
    <scope>MUTAGENESIS OF LYS-263</scope>
</reference>
<reference key="44">
    <citation type="journal article" date="2008" name="J. Cell Biol.">
        <title>Nucleolar protein B23/nucleophosmin regulates the vertebrate SUMO pathway through SENP3 and SENP5 proteases.</title>
        <authorList>
            <person name="Yun C."/>
            <person name="Wang Y."/>
            <person name="Mukhopadhyay D."/>
            <person name="Backlund P."/>
            <person name="Kolli N."/>
            <person name="Yergey A."/>
            <person name="Wilkinson K.D."/>
            <person name="Dasso M."/>
        </authorList>
    </citation>
    <scope>INTERACTION WITH SENP3</scope>
    <scope>SUBCELLULAR LOCATION</scope>
</reference>
<reference key="45">
    <citation type="journal article" date="2008" name="J. Biochem.">
        <title>The structure and functions of NPM1/Nucleophosmin/B23, a multifunctional nucleolar acidic protein.</title>
        <authorList>
            <person name="Okuwaki M."/>
        </authorList>
    </citation>
    <scope>REVIEW</scope>
</reference>
<reference key="46">
    <citation type="journal article" date="2008" name="J. Proteome Res.">
        <title>Combining protein-based IMAC, peptide-based IMAC, and MudPIT for efficient phosphoproteomic analysis.</title>
        <authorList>
            <person name="Cantin G.T."/>
            <person name="Yi W."/>
            <person name="Lu B."/>
            <person name="Park S.K."/>
            <person name="Xu T."/>
            <person name="Lee J.-D."/>
            <person name="Yates J.R. III"/>
        </authorList>
    </citation>
    <scope>PHOSPHORYLATION [LARGE SCALE ANALYSIS] AT SER-70; SER-125 AND THR-279</scope>
    <scope>IDENTIFICATION BY MASS SPECTROMETRY [LARGE SCALE ANALYSIS]</scope>
    <source>
        <tissue>Cervix carcinoma</tissue>
    </source>
</reference>
<reference key="47">
    <citation type="journal article" date="2008" name="Mol. Cell">
        <title>Kinase-selective enrichment enables quantitative phosphoproteomics of the kinome across the cell cycle.</title>
        <authorList>
            <person name="Daub H."/>
            <person name="Olsen J.V."/>
            <person name="Bairlein M."/>
            <person name="Gnad F."/>
            <person name="Oppermann F.S."/>
            <person name="Korner R."/>
            <person name="Greff Z."/>
            <person name="Keri G."/>
            <person name="Stemmann O."/>
            <person name="Mann M."/>
        </authorList>
    </citation>
    <scope>PHOSPHORYLATION [LARGE SCALE ANALYSIS] AT SER-70 AND SER-125</scope>
    <scope>IDENTIFICATION BY MASS SPECTROMETRY [LARGE SCALE ANALYSIS]</scope>
    <source>
        <tissue>Cervix carcinoma</tissue>
    </source>
</reference>
<reference key="48">
    <citation type="journal article" date="2008" name="Mol. Cell. Biol.">
        <title>Nucleophosmin serves as a rate-limiting nuclear export chaperone for the Mammalian ribosome.</title>
        <authorList>
            <person name="Maggi L.B. Jr."/>
            <person name="Kuchenruether M."/>
            <person name="Dadey D.Y."/>
            <person name="Schwope R.M."/>
            <person name="Grisendi S."/>
            <person name="Townsend R.R."/>
            <person name="Pandolfi P.P."/>
            <person name="Weber J.D."/>
        </authorList>
    </citation>
    <scope>FUNCTION</scope>
</reference>
<reference key="49">
    <citation type="journal article" date="2008" name="Proc. Natl. Acad. Sci. U.S.A.">
        <title>A quantitative atlas of mitotic phosphorylation.</title>
        <authorList>
            <person name="Dephoure N."/>
            <person name="Zhou C."/>
            <person name="Villen J."/>
            <person name="Beausoleil S.A."/>
            <person name="Bakalarski C.E."/>
            <person name="Elledge S.J."/>
            <person name="Gygi S.P."/>
        </authorList>
    </citation>
    <scope>PHOSPHORYLATION [LARGE SCALE ANALYSIS] AT SER-70; THR-75; THR-95; SER-125; SER-139; THR-234; THR-237 AND SER-243</scope>
    <scope>IDENTIFICATION BY MASS SPECTROMETRY [LARGE SCALE ANALYSIS]</scope>
    <source>
        <tissue>Cervix carcinoma</tissue>
    </source>
</reference>
<reference key="50">
    <citation type="journal article" date="2008" name="Proteomics">
        <title>Large-scale phosphoproteome analysis of human liver tissue by enrichment and fractionation of phosphopeptides with strong anion exchange chromatography.</title>
        <authorList>
            <person name="Han G."/>
            <person name="Ye M."/>
            <person name="Zhou H."/>
            <person name="Jiang X."/>
            <person name="Feng S."/>
            <person name="Jiang X."/>
            <person name="Tian R."/>
            <person name="Wan D."/>
            <person name="Zou H."/>
            <person name="Gu J."/>
        </authorList>
    </citation>
    <scope>PHOSPHORYLATION [LARGE SCALE ANALYSIS] AT SER-125</scope>
    <scope>IDENTIFICATION BY MASS SPECTROMETRY [LARGE SCALE ANALYSIS]</scope>
    <source>
        <tissue>Liver</tissue>
    </source>
</reference>
<reference key="51">
    <citation type="journal article" date="2009" name="Anal. Chem.">
        <title>Lys-N and trypsin cover complementary parts of the phosphoproteome in a refined SCX-based approach.</title>
        <authorList>
            <person name="Gauci S."/>
            <person name="Helbig A.O."/>
            <person name="Slijper M."/>
            <person name="Krijgsveld J."/>
            <person name="Heck A.J."/>
            <person name="Mohammed S."/>
        </authorList>
    </citation>
    <scope>ACETYLATION [LARGE SCALE ANALYSIS] AT MET-1</scope>
    <scope>IDENTIFICATION BY MASS SPECTROMETRY [LARGE SCALE ANALYSIS]</scope>
</reference>
<reference key="52">
    <citation type="journal article" date="2009" name="J. Biol. Chem.">
        <title>The metastasis efficiency modifier ribosomal RNA processing 1 homolog B (RRP1B) is a chromatin-associated factor.</title>
        <authorList>
            <person name="Crawford N.P."/>
            <person name="Yang H."/>
            <person name="Mattaini K.R."/>
            <person name="Hunter K.W."/>
        </authorList>
    </citation>
    <scope>INTERACTION WITH RRP1B</scope>
</reference>
<reference key="53">
    <citation type="journal article" date="2009" name="J. Cell Sci.">
        <title>Nucleolar structure and function are regulated by the deubiquitylating enzyme USP36.</title>
        <authorList>
            <person name="Endo A."/>
            <person name="Matsumoto M."/>
            <person name="Inada T."/>
            <person name="Yamamoto A."/>
            <person name="Nakayama K.I."/>
            <person name="Kitamura N."/>
            <person name="Komada M."/>
        </authorList>
    </citation>
    <scope>SUBCELLULAR LOCATION</scope>
    <scope>UBIQUITINATION</scope>
    <scope>DEUBIQUITINATION BY USP36</scope>
</reference>
<reference key="54">
    <citation type="journal article" date="2009" name="Mol. Cell. Biol.">
        <title>APE1/Ref-1 interacts with NPM1 within nucleoli and plays a role in the rRNA quality control process.</title>
        <authorList>
            <person name="Vascotto C."/>
            <person name="Fantini D."/>
            <person name="Romanello M."/>
            <person name="Cesaratto L."/>
            <person name="Deganuto M."/>
            <person name="Leonardi A."/>
            <person name="Radicella J.P."/>
            <person name="Kelley M.R."/>
            <person name="D'Ambrosio C."/>
            <person name="Scaloni A."/>
            <person name="Quadrifoglio F."/>
            <person name="Tell G."/>
        </authorList>
    </citation>
    <scope>FUNCTION</scope>
    <scope>INTERACTION WITH APEX1</scope>
    <scope>IDENTIFICATION BY MASS SPECTROMETRY</scope>
    <scope>SUBCELLULAR LOCATION</scope>
</reference>
<reference key="55">
    <citation type="journal article" date="2009" name="Mol. Cell. Proteomics">
        <title>Large-scale proteomics analysis of the human kinome.</title>
        <authorList>
            <person name="Oppermann F.S."/>
            <person name="Gnad F."/>
            <person name="Olsen J.V."/>
            <person name="Hornberger R."/>
            <person name="Greff Z."/>
            <person name="Keri G."/>
            <person name="Mann M."/>
            <person name="Daub H."/>
        </authorList>
    </citation>
    <scope>PHOSPHORYLATION [LARGE SCALE ANALYSIS] AT SER-125</scope>
    <scope>IDENTIFICATION BY MASS SPECTROMETRY [LARGE SCALE ANALYSIS]</scope>
</reference>
<reference key="56">
    <citation type="journal article" date="2009" name="Sci. Signal.">
        <title>Quantitative phosphoproteomic analysis of T cell receptor signaling reveals system-wide modulation of protein-protein interactions.</title>
        <authorList>
            <person name="Mayya V."/>
            <person name="Lundgren D.H."/>
            <person name="Hwang S.-I."/>
            <person name="Rezaul K."/>
            <person name="Wu L."/>
            <person name="Eng J.K."/>
            <person name="Rodionov V."/>
            <person name="Han D.K."/>
        </authorList>
    </citation>
    <scope>PHOSPHORYLATION [LARGE SCALE ANALYSIS] AT SER-70 AND SER-125</scope>
    <scope>IDENTIFICATION BY MASS SPECTROMETRY [LARGE SCALE ANALYSIS]</scope>
    <source>
        <tissue>Leukemic T-cell</tissue>
    </source>
</reference>
<reference key="57">
    <citation type="journal article" date="2009" name="Science">
        <title>Lysine acetylation targets protein complexes and co-regulates major cellular functions.</title>
        <authorList>
            <person name="Choudhary C."/>
            <person name="Kumar C."/>
            <person name="Gnad F."/>
            <person name="Nielsen M.L."/>
            <person name="Rehman M."/>
            <person name="Walther T.C."/>
            <person name="Olsen J.V."/>
            <person name="Mann M."/>
        </authorList>
    </citation>
    <scope>ACETYLATION [LARGE SCALE ANALYSIS] AT LYS-32; LYS-150; LYS-257; LYS-267 AND LYS-273</scope>
    <scope>ACETYLATION [LARGE SCALE ANALYSIS] AT LYS-257 (ISOFORM 3)</scope>
    <scope>IDENTIFICATION BY MASS SPECTROMETRY [LARGE SCALE ANALYSIS]</scope>
</reference>
<reference key="58">
    <citation type="journal article" date="2010" name="EMBO J.">
        <title>Nucleolar retention of a translational C/EBPalpha isoform stimulates rDNA transcription and cell size.</title>
        <authorList>
            <person name="Muller C."/>
            <person name="Bremer A."/>
            <person name="Schreiber S."/>
            <person name="Eichwald S."/>
            <person name="Calkhoven C.F."/>
        </authorList>
    </citation>
    <scope>INTERACTION WITH CEBPA</scope>
</reference>
<reference key="59">
    <citation type="journal article" date="2010" name="J. Biol. Chem.">
        <title>Methylation of ribosomal protein S10 by protein-arginine methyltransferase 5 regulates ribosome biogenesis.</title>
        <authorList>
            <person name="Ren J."/>
            <person name="Wang Y."/>
            <person name="Liang Y."/>
            <person name="Zhang Y."/>
            <person name="Bao S."/>
            <person name="Xu Z."/>
        </authorList>
    </citation>
    <scope>SUBCELLULAR LOCATION</scope>
    <scope>INTERACTION WITH RPS10</scope>
</reference>
<reference key="60">
    <citation type="journal article" date="2010" name="Mol. Biol. Cell">
        <title>RRP1B targets PP1 to mammalian cell nucleoli and is associated with pre-60S ribosomal subunits.</title>
        <authorList>
            <person name="Chamousset D."/>
            <person name="De Wever V."/>
            <person name="Moorhead G.B."/>
            <person name="Chen Y."/>
            <person name="Boisvert F.M."/>
            <person name="Lamond A.I."/>
            <person name="Trinkle-Mulcahy L."/>
        </authorList>
    </citation>
    <scope>INTERACTION WITH RRP1B</scope>
</reference>
<reference key="61">
    <citation type="journal article" date="2010" name="PLoS ONE">
        <title>Polo-like kinase 2-dependent phosphorylation of NPM/B23 on serine 4 triggers centriole duplication.</title>
        <authorList>
            <person name="Krause A."/>
            <person name="Hoffmann I."/>
        </authorList>
    </citation>
    <scope>FUNCTION</scope>
    <scope>PHOSPHORYLATION AT SER-4 BY PLK2</scope>
    <scope>MUTAGENESIS OF SER-4; THR-95; SER-125 AND THR-199</scope>
</reference>
<reference key="62">
    <citation type="journal article" date="2010" name="PLoS Pathog.">
        <title>Nucleophosmin phosphorylation by v-cyclin-CDK6 controls KSHV latency.</title>
        <authorList>
            <person name="Sarek G."/>
            <person name="Jaerviluoma A."/>
            <person name="Moore H.M."/>
            <person name="Tojkander S."/>
            <person name="Vartia S."/>
            <person name="Biberfeld P."/>
            <person name="Laiho M."/>
            <person name="Ojala P.M."/>
        </authorList>
    </citation>
    <scope>PHOSPHORYLATION AT THR-199 BY CDK6</scope>
</reference>
<reference key="63">
    <citation type="journal article" date="2010" name="Sci. Signal.">
        <title>Quantitative phosphoproteomics reveals widespread full phosphorylation site occupancy during mitosis.</title>
        <authorList>
            <person name="Olsen J.V."/>
            <person name="Vermeulen M."/>
            <person name="Santamaria A."/>
            <person name="Kumar C."/>
            <person name="Miller M.L."/>
            <person name="Jensen L.J."/>
            <person name="Gnad F."/>
            <person name="Cox J."/>
            <person name="Jensen T.S."/>
            <person name="Nigg E.A."/>
            <person name="Brunak S."/>
            <person name="Mann M."/>
        </authorList>
    </citation>
    <scope>ACETYLATION [LARGE SCALE ANALYSIS] AT MET-1</scope>
    <scope>PHOSPHORYLATION [LARGE SCALE ANALYSIS] AT SER-4; SER-10; SER-70; THR-95; SER-125; SER-137; SER-139; THR-199; SER-242; SER-243; SER-260 AND THR-279</scope>
    <scope>PHOSPHORYLATION [LARGE SCALE ANALYSIS] AT SER-254 (ISOFORM 3)</scope>
    <scope>IDENTIFICATION BY MASS SPECTROMETRY [LARGE SCALE ANALYSIS]</scope>
    <source>
        <tissue>Cervix carcinoma</tissue>
    </source>
</reference>
<reference key="64">
    <citation type="journal article" date="2011" name="BMC Syst. Biol.">
        <title>Initial characterization of the human central proteome.</title>
        <authorList>
            <person name="Burkard T.R."/>
            <person name="Planyavsky M."/>
            <person name="Kaupe I."/>
            <person name="Breitwieser F.P."/>
            <person name="Buerckstuemmer T."/>
            <person name="Bennett K.L."/>
            <person name="Superti-Furga G."/>
            <person name="Colinge J."/>
        </authorList>
    </citation>
    <scope>IDENTIFICATION BY MASS SPECTROMETRY [LARGE SCALE ANALYSIS]</scope>
</reference>
<reference key="65">
    <citation type="journal article" date="2011" name="Cancer Res.">
        <title>BRCA2 and nucleophosmin coregulate centrosome amplification and form a complex with the Rho effector kinase ROCK2.</title>
        <authorList>
            <person name="Wang H.F."/>
            <person name="Takenaka K."/>
            <person name="Nakanishi A."/>
            <person name="Miki Y."/>
        </authorList>
    </citation>
    <scope>FUNCTION</scope>
    <scope>INTERACTION WITH BRCA2</scope>
</reference>
<reference key="66">
    <citation type="journal article" date="2011" name="J. Biol. Chem.">
        <title>New centromeric component CENP-W is an RNA-associated nuclear matrix protein that interacts with nucleophosmin/B23 protein.</title>
        <authorList>
            <person name="Chun Y."/>
            <person name="Park B."/>
            <person name="Koh W."/>
            <person name="Lee S."/>
            <person name="Cheon Y."/>
            <person name="Kim R."/>
            <person name="Che L."/>
            <person name="Lee S."/>
        </authorList>
    </citation>
    <scope>FUNCTION</scope>
    <scope>SUBCELLULAR LOCATION</scope>
    <scope>INTERACTION WITH CENPW</scope>
</reference>
<reference key="67">
    <citation type="journal article" date="2011" name="Sci. Signal.">
        <title>System-wide temporal characterization of the proteome and phosphoproteome of human embryonic stem cell differentiation.</title>
        <authorList>
            <person name="Rigbolt K.T."/>
            <person name="Prokhorova T.A."/>
            <person name="Akimov V."/>
            <person name="Henningsen J."/>
            <person name="Johansen P.T."/>
            <person name="Kratchmarova I."/>
            <person name="Kassem M."/>
            <person name="Mann M."/>
            <person name="Olsen J.V."/>
            <person name="Blagoev B."/>
        </authorList>
    </citation>
    <scope>ACETYLATION [LARGE SCALE ANALYSIS] AT MET-1</scope>
    <scope>PHOSPHORYLATION [LARGE SCALE ANALYSIS] AT SER-4; SER-70; SER-125; SER-227; SER-243 AND SER-254</scope>
    <scope>IDENTIFICATION BY MASS SPECTROMETRY [LARGE SCALE ANALYSIS]</scope>
</reference>
<reference key="68">
    <citation type="journal article" date="2012" name="J. Biol. Chem.">
        <title>Nucleophosmin (NPM1/B23) interacts with activating transcription factor 5 (ATF5) protein and promotes proteasome- and caspase-dependent ATF5 degradation in hepatocellular carcinoma cells.</title>
        <authorList>
            <person name="Liu X."/>
            <person name="Liu D."/>
            <person name="Qian D."/>
            <person name="Dai J."/>
            <person name="An Y."/>
            <person name="Jiang S."/>
            <person name="Stanley B."/>
            <person name="Yang J."/>
            <person name="Wang B."/>
            <person name="Liu X."/>
            <person name="Liu D.X."/>
        </authorList>
    </citation>
    <scope>FUNCTION</scope>
    <scope>INTERACTION WITH ATF5</scope>
    <scope>SUBCELLULAR LOCATION</scope>
</reference>
<reference key="69">
    <citation type="journal article" date="2012" name="Cancer Res.">
        <title>DDX31 regulates the p53-HDM2 pathway and rRNA gene transcription through its interaction with NPM1 in renal cell carcinomas.</title>
        <authorList>
            <person name="Fukawa T."/>
            <person name="Ono M."/>
            <person name="Matsuo T."/>
            <person name="Uehara H."/>
            <person name="Miki T."/>
            <person name="Nakamura Y."/>
            <person name="Kanayama H.O."/>
            <person name="Katagiri T."/>
        </authorList>
    </citation>
    <scope>INTERACTION WITH DDX31</scope>
</reference>
<reference key="70">
    <citation type="journal article" date="2012" name="Mol. Cell. Proteomics">
        <title>Comparative large-scale characterisation of plant vs. mammal proteins reveals similar and idiosyncratic N-alpha acetylation features.</title>
        <authorList>
            <person name="Bienvenut W.V."/>
            <person name="Sumpton D."/>
            <person name="Martinez A."/>
            <person name="Lilla S."/>
            <person name="Espagne C."/>
            <person name="Meinnel T."/>
            <person name="Giglione C."/>
        </authorList>
    </citation>
    <scope>ACETYLATION [LARGE SCALE ANALYSIS] AT MET-1</scope>
    <scope>IDENTIFICATION BY MASS SPECTROMETRY [LARGE SCALE ANALYSIS]</scope>
</reference>
<reference key="71">
    <citation type="journal article" date="2012" name="Nucleic Acids Res.">
        <title>Function of homo- and hetero-oligomers of human nucleoplasmin/nucleophosmin family proteins NPM1, NPM2 and NPM3 during sperm chromatin remodeling.</title>
        <authorList>
            <person name="Okuwaki M."/>
            <person name="Sumi A."/>
            <person name="Hisaoka M."/>
            <person name="Saotome-Nakamura A."/>
            <person name="Akashi S."/>
            <person name="Nishimura Y."/>
            <person name="Nagata K."/>
        </authorList>
    </citation>
    <scope>INTERACTION WITH NPM3</scope>
</reference>
<reference key="72">
    <citation type="journal article" date="2013" name="Cell Rep.">
        <title>ABH2 couples regulation of ribosomal DNA transcription with DNA alkylation repair.</title>
        <authorList>
            <person name="Li P."/>
            <person name="Gao S."/>
            <person name="Wang L."/>
            <person name="Yu F."/>
            <person name="Li J."/>
            <person name="Wang C."/>
            <person name="Li J."/>
            <person name="Wong J."/>
        </authorList>
    </citation>
    <scope>INTERACTION WITH ALKBH2</scope>
</reference>
<reference key="73">
    <citation type="journal article" date="2013" name="J. Proteome Res.">
        <title>Toward a comprehensive characterization of a human cancer cell phosphoproteome.</title>
        <authorList>
            <person name="Zhou H."/>
            <person name="Di Palma S."/>
            <person name="Preisinger C."/>
            <person name="Peng M."/>
            <person name="Polat A.N."/>
            <person name="Heck A.J."/>
            <person name="Mohammed S."/>
        </authorList>
    </citation>
    <scope>PHOSPHORYLATION [LARGE SCALE ANALYSIS] AT SER-4; SER-10; SER-43; SER-70; THR-95; SER-125; SER-139; THR-234; THR-237; SER-242; SER-243; SER-254 AND SER-260</scope>
    <scope>IDENTIFICATION BY MASS SPECTROMETRY [LARGE SCALE ANALYSIS]</scope>
    <source>
        <tissue>Cervix carcinoma</tissue>
        <tissue>Erythroleukemia</tissue>
    </source>
</reference>
<reference key="74">
    <citation type="journal article" date="2014" name="J. Proteomics">
        <title>An enzyme assisted RP-RPLC approach for in-depth analysis of human liver phosphoproteome.</title>
        <authorList>
            <person name="Bian Y."/>
            <person name="Song C."/>
            <person name="Cheng K."/>
            <person name="Dong M."/>
            <person name="Wang F."/>
            <person name="Huang J."/>
            <person name="Sun D."/>
            <person name="Wang L."/>
            <person name="Ye M."/>
            <person name="Zou H."/>
        </authorList>
    </citation>
    <scope>PHOSPHORYLATION [LARGE SCALE ANALYSIS] AT SER-70 AND SER-243</scope>
    <scope>IDENTIFICATION BY MASS SPECTROMETRY [LARGE SCALE ANALYSIS]</scope>
    <source>
        <tissue>Liver</tissue>
    </source>
</reference>
<reference key="75">
    <citation type="journal article" date="2014" name="Nat. Struct. Mol. Biol.">
        <title>Uncovering global SUMOylation signaling networks in a site-specific manner.</title>
        <authorList>
            <person name="Hendriks I.A."/>
            <person name="D'Souza R.C."/>
            <person name="Yang B."/>
            <person name="Verlaan-de Vries M."/>
            <person name="Mann M."/>
            <person name="Vertegaal A.C."/>
        </authorList>
    </citation>
    <scope>SUMOYLATION [LARGE SCALE ANALYSIS] AT LYS-27; LYS-32; LYS-248 AND LYS-250</scope>
    <scope>IDENTIFICATION BY MASS SPECTROMETRY [LARGE SCALE ANALYSIS]</scope>
</reference>
<reference key="76">
    <citation type="journal article" date="2014" name="Proc. Natl. Acad. Sci. U.S.A.">
        <title>Mapping of SUMO sites and analysis of SUMOylation changes induced by external stimuli.</title>
        <authorList>
            <person name="Impens F."/>
            <person name="Radoshevich L."/>
            <person name="Cossart P."/>
            <person name="Ribet D."/>
        </authorList>
    </citation>
    <scope>SUMOYLATION [LARGE SCALE ANALYSIS] AT LYS-32; LYS-248; LYS-257 AND LYS-267</scope>
    <scope>IDENTIFICATION BY MASS SPECTROMETRY [LARGE SCALE ANALYSIS]</scope>
</reference>
<reference key="77">
    <citation type="journal article" date="2015" name="Am. J. Pathol.">
        <title>The nucleolar protein GLTSCR2 is an upstream negative regulator of the oncogenic Nucleophosmin-MYC axis.</title>
        <authorList>
            <person name="Kim J.Y."/>
            <person name="Cho Y.E."/>
            <person name="Park J.H."/>
        </authorList>
    </citation>
    <scope>FUNCTION</scope>
    <scope>SUBCELLULAR LOCATION</scope>
    <scope>INTERACTION WITH MYC AND NOP53</scope>
</reference>
<reference key="78">
    <citation type="journal article" date="2015" name="Cell Rep.">
        <title>SUMO-2 orchestrates chromatin modifiers in response to DNA damage.</title>
        <authorList>
            <person name="Hendriks I.A."/>
            <person name="Treffers L.W."/>
            <person name="Verlaan-de Vries M."/>
            <person name="Olsen J.V."/>
            <person name="Vertegaal A.C."/>
        </authorList>
    </citation>
    <scope>SUMOYLATION [LARGE SCALE ANALYSIS] AT LYS-32 AND LYS-215</scope>
    <scope>IDENTIFICATION BY MASS SPECTROMETRY [LARGE SCALE ANALYSIS]</scope>
</reference>
<reference key="79">
    <citation type="journal article" date="2015" name="J. Cell. Mol. Med.">
        <title>GLTSCR2 is an upstream negative regulator of nucleophosmin in cervical cancer.</title>
        <authorList>
            <person name="Kim J.Y."/>
            <person name="Cho Y.E."/>
            <person name="An Y.M."/>
            <person name="Kim S.H."/>
            <person name="Lee Y.G."/>
            <person name="Park J.H."/>
            <person name="Lee S."/>
        </authorList>
    </citation>
    <scope>SUBUNIT</scope>
    <scope>SUBCELLULAR LOCATION</scope>
    <scope>UBIQUITINATION</scope>
</reference>
<reference key="80">
    <citation type="journal article" date="2015" name="Mol. Cell. Proteomics">
        <title>System-wide analysis of SUMOylation dynamics in response to replication stress reveals novel small ubiquitin-like modified target proteins and acceptor lysines relevant for genome stability.</title>
        <authorList>
            <person name="Xiao Z."/>
            <person name="Chang J.G."/>
            <person name="Hendriks I.A."/>
            <person name="Sigurdsson J.O."/>
            <person name="Olsen J.V."/>
            <person name="Vertegaal A.C."/>
        </authorList>
    </citation>
    <scope>SUMOYLATION [LARGE SCALE ANALYSIS] AT LYS-32</scope>
    <scope>IDENTIFICATION BY MASS SPECTROMETRY [LARGE SCALE ANALYSIS]</scope>
</reference>
<reference key="81">
    <citation type="journal article" date="2015" name="Proteomics">
        <title>N-terminome analysis of the human mitochondrial proteome.</title>
        <authorList>
            <person name="Vaca Jacome A.S."/>
            <person name="Rabilloud T."/>
            <person name="Schaeffer-Reiss C."/>
            <person name="Rompais M."/>
            <person name="Ayoub D."/>
            <person name="Lane L."/>
            <person name="Bairoch A."/>
            <person name="Van Dorsselaer A."/>
            <person name="Carapito C."/>
        </authorList>
    </citation>
    <scope>IDENTIFICATION BY MASS SPECTROMETRY [LARGE SCALE ANALYSIS]</scope>
</reference>
<reference key="82">
    <citation type="journal article" date="2017" name="Mol. Cell">
        <title>Serine ADP-ribosylation depends on HPF1.</title>
        <authorList>
            <person name="Bonfiglio J.J."/>
            <person name="Fontana P."/>
            <person name="Zhang Q."/>
            <person name="Colby T."/>
            <person name="Gibbs-Seymour I."/>
            <person name="Atanassov I."/>
            <person name="Bartlett E."/>
            <person name="Zaja R."/>
            <person name="Ahel I."/>
            <person name="Matic I."/>
        </authorList>
    </citation>
    <scope>ADP-RIBOSYLATION AT SER-207</scope>
</reference>
<reference key="83">
    <citation type="journal article" date="2017" name="Nat. Struct. Mol. Biol.">
        <title>Site-specific mapping of the human SUMO proteome reveals co-modification with phosphorylation.</title>
        <authorList>
            <person name="Hendriks I.A."/>
            <person name="Lyon D."/>
            <person name="Young C."/>
            <person name="Jensen L.J."/>
            <person name="Vertegaal A.C."/>
            <person name="Nielsen M.L."/>
        </authorList>
    </citation>
    <scope>SUMOYLATION [LARGE SCALE ANALYSIS] AT LYS-32; LYS-141; LYS-150; LYS-215; LYS-248; LYS-250; LYS-257; LYS-263; LYS-267 AND LYS-273</scope>
    <scope>IDENTIFICATION BY MASS SPECTROMETRY [LARGE SCALE ANALYSIS]</scope>
</reference>
<reference key="84">
    <citation type="journal article" date="2024" name="J. Proteome Res.">
        <title>ARID3C Acts as a Regulator of Monocyte-to-Macrophage Differentiation Interacting with NPM1.</title>
        <authorList>
            <person name="Kim H.S."/>
            <person name="Kim Y.I."/>
            <person name="Cho J.Y."/>
        </authorList>
    </citation>
    <scope>INTERACTION WITH ARID3C</scope>
    <scope>SUBCELLULAR LOCATION</scope>
</reference>
<reference key="85">
    <citation type="journal article" date="2007" name="Proteins">
        <title>Crystal structure of human nucleophosmin-core reveals plasticity of the pentamer-pentamer interface.</title>
        <authorList>
            <person name="Lee H.H."/>
            <person name="Kim H.S."/>
            <person name="Kang J.Y."/>
            <person name="Lee B.I."/>
            <person name="Ha J.Y."/>
            <person name="Yoon H.J."/>
            <person name="Lim S.O."/>
            <person name="Jung G."/>
            <person name="Suh S.W."/>
        </authorList>
    </citation>
    <scope>X-RAY CRYSTALLOGRAPHY (2.75 ANGSTROMS) OF 9-124</scope>
</reference>
<reference key="86">
    <citation type="journal article" date="2008" name="J. Biol. Chem.">
        <title>Structural consequences of nucleophosmin mutations in acute myeloid leukemia.</title>
        <authorList>
            <person name="Grummitt C.G."/>
            <person name="Townsley F.M."/>
            <person name="Johnson C.M."/>
            <person name="Warren A.J."/>
            <person name="Bycroft M."/>
        </authorList>
    </citation>
    <scope>STRUCTURE BY NMR OF 243-294</scope>
    <scope>MUTAGENESIS OF LYS-248; LYS-250; LYS-267; PHE-268; PHE-276; TRP-288 AND TRP-290</scope>
</reference>
<dbReference type="EMBL" id="M23613">
    <property type="protein sequence ID" value="AAA36380.1"/>
    <property type="molecule type" value="mRNA"/>
</dbReference>
<dbReference type="EMBL" id="M28699">
    <property type="protein sequence ID" value="AAA58386.1"/>
    <property type="molecule type" value="mRNA"/>
</dbReference>
<dbReference type="EMBL" id="M26697">
    <property type="protein sequence ID" value="AAA36385.1"/>
    <property type="molecule type" value="mRNA"/>
</dbReference>
<dbReference type="EMBL" id="U89321">
    <property type="protein sequence ID" value="AAB94739.1"/>
    <property type="molecule type" value="Genomic_DNA"/>
</dbReference>
<dbReference type="EMBL" id="U89309">
    <property type="protein sequence ID" value="AAB94739.1"/>
    <property type="status" value="JOINED"/>
    <property type="molecule type" value="Genomic_DNA"/>
</dbReference>
<dbReference type="EMBL" id="U89310">
    <property type="protein sequence ID" value="AAB94739.1"/>
    <property type="status" value="JOINED"/>
    <property type="molecule type" value="Genomic_DNA"/>
</dbReference>
<dbReference type="EMBL" id="U89311">
    <property type="protein sequence ID" value="AAB94739.1"/>
    <property type="status" value="JOINED"/>
    <property type="molecule type" value="Genomic_DNA"/>
</dbReference>
<dbReference type="EMBL" id="U89313">
    <property type="protein sequence ID" value="AAB94739.1"/>
    <property type="status" value="JOINED"/>
    <property type="molecule type" value="Genomic_DNA"/>
</dbReference>
<dbReference type="EMBL" id="U89314">
    <property type="protein sequence ID" value="AAB94739.1"/>
    <property type="status" value="JOINED"/>
    <property type="molecule type" value="Genomic_DNA"/>
</dbReference>
<dbReference type="EMBL" id="U89317">
    <property type="protein sequence ID" value="AAB94739.1"/>
    <property type="status" value="JOINED"/>
    <property type="molecule type" value="Genomic_DNA"/>
</dbReference>
<dbReference type="EMBL" id="U89319">
    <property type="protein sequence ID" value="AAB94739.1"/>
    <property type="status" value="JOINED"/>
    <property type="molecule type" value="Genomic_DNA"/>
</dbReference>
<dbReference type="EMBL" id="AB042278">
    <property type="protein sequence ID" value="BAB40600.1"/>
    <property type="molecule type" value="mRNA"/>
</dbReference>
<dbReference type="EMBL" id="AY740634">
    <property type="protein sequence ID" value="AAW67752.1"/>
    <property type="molecule type" value="mRNA"/>
</dbReference>
<dbReference type="EMBL" id="AY740635">
    <property type="protein sequence ID" value="AAW67753.1"/>
    <property type="molecule type" value="mRNA"/>
</dbReference>
<dbReference type="EMBL" id="AY740636">
    <property type="protein sequence ID" value="AAW67754.1"/>
    <property type="molecule type" value="mRNA"/>
</dbReference>
<dbReference type="EMBL" id="AY740637">
    <property type="protein sequence ID" value="AAW67755.1"/>
    <property type="molecule type" value="mRNA"/>
</dbReference>
<dbReference type="EMBL" id="AY740638">
    <property type="protein sequence ID" value="AAW67756.1"/>
    <property type="molecule type" value="mRNA"/>
</dbReference>
<dbReference type="EMBL" id="AY740639">
    <property type="protein sequence ID" value="AAW67757.1"/>
    <property type="molecule type" value="mRNA"/>
</dbReference>
<dbReference type="EMBL" id="AY740640">
    <property type="protein sequence ID" value="AAW67758.1"/>
    <property type="molecule type" value="mRNA"/>
</dbReference>
<dbReference type="EMBL" id="DQ303464">
    <property type="protein sequence ID" value="ABC40399.1"/>
    <property type="molecule type" value="mRNA"/>
</dbReference>
<dbReference type="EMBL" id="AY347529">
    <property type="protein sequence ID" value="AAQ24860.1"/>
    <property type="molecule type" value="mRNA"/>
</dbReference>
<dbReference type="EMBL" id="BT007011">
    <property type="protein sequence ID" value="AAP35657.1"/>
    <property type="molecule type" value="mRNA"/>
</dbReference>
<dbReference type="EMBL" id="AK290652">
    <property type="protein sequence ID" value="BAF83341.1"/>
    <property type="molecule type" value="mRNA"/>
</dbReference>
<dbReference type="EMBL" id="AB451236">
    <property type="protein sequence ID" value="BAG70050.1"/>
    <property type="molecule type" value="mRNA"/>
</dbReference>
<dbReference type="EMBL" id="AB451361">
    <property type="protein sequence ID" value="BAG70175.1"/>
    <property type="molecule type" value="mRNA"/>
</dbReference>
<dbReference type="EMBL" id="CH471062">
    <property type="protein sequence ID" value="EAW61443.1"/>
    <property type="molecule type" value="Genomic_DNA"/>
</dbReference>
<dbReference type="EMBL" id="CH471062">
    <property type="protein sequence ID" value="EAW61446.1"/>
    <property type="molecule type" value="Genomic_DNA"/>
</dbReference>
<dbReference type="EMBL" id="BC002398">
    <property type="protein sequence ID" value="AAH02398.1"/>
    <property type="molecule type" value="mRNA"/>
</dbReference>
<dbReference type="EMBL" id="BC008495">
    <property type="protein sequence ID" value="AAH08495.1"/>
    <property type="molecule type" value="mRNA"/>
</dbReference>
<dbReference type="EMBL" id="BC009623">
    <property type="protein sequence ID" value="AAH09623.1"/>
    <property type="molecule type" value="mRNA"/>
</dbReference>
<dbReference type="EMBL" id="BC012566">
    <property type="protein sequence ID" value="AAH12566.1"/>
    <property type="molecule type" value="mRNA"/>
</dbReference>
<dbReference type="EMBL" id="BC014349">
    <property type="protein sequence ID" value="AAH14349.1"/>
    <property type="molecule type" value="mRNA"/>
</dbReference>
<dbReference type="EMBL" id="BC016716">
    <property type="protein sequence ID" value="AAH16716.1"/>
    <property type="molecule type" value="mRNA"/>
</dbReference>
<dbReference type="EMBL" id="BC016768">
    <property type="protein sequence ID" value="AAH16768.1"/>
    <property type="molecule type" value="mRNA"/>
</dbReference>
<dbReference type="EMBL" id="BC016824">
    <property type="protein sequence ID" value="AAH16824.1"/>
    <property type="molecule type" value="mRNA"/>
</dbReference>
<dbReference type="EMBL" id="BC021668">
    <property type="protein sequence ID" value="AAH21668.1"/>
    <property type="molecule type" value="mRNA"/>
</dbReference>
<dbReference type="EMBL" id="BC021983">
    <property type="protein sequence ID" value="AAH21983.1"/>
    <property type="molecule type" value="mRNA"/>
</dbReference>
<dbReference type="EMBL" id="BC050628">
    <property type="protein sequence ID" value="AAH50628.1"/>
    <property type="molecule type" value="mRNA"/>
</dbReference>
<dbReference type="EMBL" id="BC107754">
    <property type="protein sequence ID" value="AAI07755.1"/>
    <property type="molecule type" value="mRNA"/>
</dbReference>
<dbReference type="EMBL" id="U41742">
    <property type="protein sequence ID" value="AAB00112.1"/>
    <property type="status" value="ALT_TERM"/>
    <property type="molecule type" value="mRNA"/>
</dbReference>
<dbReference type="EMBL" id="U41743">
    <property type="protein sequence ID" value="AAB00113.1"/>
    <property type="status" value="ALT_TERM"/>
    <property type="molecule type" value="mRNA"/>
</dbReference>
<dbReference type="EMBL" id="U04946">
    <property type="protein sequence ID" value="AAA58698.1"/>
    <property type="status" value="ALT_TERM"/>
    <property type="molecule type" value="mRNA"/>
</dbReference>
<dbReference type="EMBL" id="D45915">
    <property type="protein sequence ID" value="BAA08343.1"/>
    <property type="status" value="ALT_TERM"/>
    <property type="molecule type" value="mRNA"/>
</dbReference>
<dbReference type="EMBL" id="X16934">
    <property type="protein sequence ID" value="CAA34809.1"/>
    <property type="molecule type" value="mRNA"/>
</dbReference>
<dbReference type="EMBL" id="J02590">
    <property type="protein sequence ID" value="AAA36473.1"/>
    <property type="molecule type" value="mRNA"/>
</dbReference>
<dbReference type="EMBL" id="M31004">
    <property type="protein sequence ID" value="AAA36474.1"/>
    <property type="molecule type" value="mRNA"/>
</dbReference>
<dbReference type="CCDS" id="CCDS43399.1">
    <molecule id="P06748-3"/>
</dbReference>
<dbReference type="CCDS" id="CCDS4376.1">
    <molecule id="P06748-1"/>
</dbReference>
<dbReference type="CCDS" id="CCDS4377.1">
    <molecule id="P06748-2"/>
</dbReference>
<dbReference type="PIR" id="A33423">
    <property type="entry name" value="A32915"/>
</dbReference>
<dbReference type="PIR" id="I38491">
    <property type="entry name" value="I38491"/>
</dbReference>
<dbReference type="RefSeq" id="NP_001032827.1">
    <molecule id="P06748-3"/>
    <property type="nucleotide sequence ID" value="NM_001037738.3"/>
</dbReference>
<dbReference type="RefSeq" id="NP_001341935.1">
    <molecule id="P06748-1"/>
    <property type="nucleotide sequence ID" value="NM_001355006.2"/>
</dbReference>
<dbReference type="RefSeq" id="NP_002511.1">
    <molecule id="P06748-1"/>
    <property type="nucleotide sequence ID" value="NM_002520.7"/>
</dbReference>
<dbReference type="RefSeq" id="NP_954654.1">
    <molecule id="P06748-2"/>
    <property type="nucleotide sequence ID" value="NM_199185.4"/>
</dbReference>
<dbReference type="PDB" id="2LLH">
    <property type="method" value="NMR"/>
    <property type="chains" value="A=225-294"/>
</dbReference>
<dbReference type="PDB" id="2P1B">
    <property type="method" value="X-ray"/>
    <property type="resolution" value="2.75 A"/>
    <property type="chains" value="A/B/C/D/E/F/G/H/I/J=9-122"/>
</dbReference>
<dbReference type="PDB" id="2VXD">
    <property type="method" value="NMR"/>
    <property type="chains" value="A=243-294"/>
</dbReference>
<dbReference type="PDB" id="5EHD">
    <property type="method" value="X-ray"/>
    <property type="resolution" value="2.55 A"/>
    <property type="chains" value="A/B/C/D/E/F/G/H/I/J/a/b/c/d/e/f/g/h/i/j=9-124"/>
</dbReference>
<dbReference type="PDB" id="7OBG">
    <property type="method" value="X-ray"/>
    <property type="resolution" value="1.80 A"/>
    <property type="chains" value="B=284-294"/>
</dbReference>
<dbReference type="PDB" id="7OBH">
    <property type="method" value="X-ray"/>
    <property type="resolution" value="2.00 A"/>
    <property type="chains" value="B=284-294"/>
</dbReference>
<dbReference type="PDB" id="8AH2">
    <property type="method" value="X-ray"/>
    <property type="resolution" value="2.90 A"/>
    <property type="chains" value="A/C=44-55"/>
</dbReference>
<dbReference type="PDB" id="8AS5">
    <property type="method" value="EM"/>
    <property type="resolution" value="2.50 A"/>
    <property type="chains" value="A/B/C/D/E=1-294"/>
</dbReference>
<dbReference type="PDBsum" id="2LLH"/>
<dbReference type="PDBsum" id="2P1B"/>
<dbReference type="PDBsum" id="2VXD"/>
<dbReference type="PDBsum" id="5EHD"/>
<dbReference type="PDBsum" id="7OBG"/>
<dbReference type="PDBsum" id="7OBH"/>
<dbReference type="PDBsum" id="8AH2"/>
<dbReference type="PDBsum" id="8AS5"/>
<dbReference type="BMRB" id="P06748"/>
<dbReference type="EMDB" id="EMD-15606"/>
<dbReference type="SMR" id="P06748"/>
<dbReference type="BioGRID" id="110929">
    <property type="interactions" value="1269"/>
</dbReference>
<dbReference type="CORUM" id="P06748"/>
<dbReference type="DIP" id="DIP-30932N"/>
<dbReference type="FunCoup" id="P06748">
    <property type="interactions" value="1923"/>
</dbReference>
<dbReference type="IntAct" id="P06748">
    <property type="interactions" value="1111"/>
</dbReference>
<dbReference type="MINT" id="P06748"/>
<dbReference type="STRING" id="9606.ENSP00000296930"/>
<dbReference type="BindingDB" id="P06748"/>
<dbReference type="ChEMBL" id="CHEMBL5178"/>
<dbReference type="DrugBank" id="DB11638">
    <property type="generic name" value="Artenimol"/>
</dbReference>
<dbReference type="DrugCentral" id="P06748"/>
<dbReference type="GlyCosmos" id="P06748">
    <property type="glycosylation" value="4 sites, 1 glycan"/>
</dbReference>
<dbReference type="GlyGen" id="P06748">
    <property type="glycosylation" value="7 sites, 1 O-linked glycan (6 sites)"/>
</dbReference>
<dbReference type="iPTMnet" id="P06748"/>
<dbReference type="MetOSite" id="P06748"/>
<dbReference type="PhosphoSitePlus" id="P06748"/>
<dbReference type="SwissPalm" id="P06748"/>
<dbReference type="BioMuta" id="NPM1"/>
<dbReference type="DMDM" id="114762"/>
<dbReference type="REPRODUCTION-2DPAGE" id="IPI00549248"/>
<dbReference type="jPOST" id="P06748"/>
<dbReference type="MassIVE" id="P06748"/>
<dbReference type="PaxDb" id="9606-ENSP00000296930"/>
<dbReference type="PeptideAtlas" id="P06748"/>
<dbReference type="PRIDE" id="P06748"/>
<dbReference type="ProteomicsDB" id="51927">
    <molecule id="P06748-1"/>
</dbReference>
<dbReference type="ProteomicsDB" id="51928">
    <molecule id="P06748-2"/>
</dbReference>
<dbReference type="ProteomicsDB" id="51929">
    <molecule id="P06748-3"/>
</dbReference>
<dbReference type="Pumba" id="P06748"/>
<dbReference type="TopDownProteomics" id="P06748-1">
    <molecule id="P06748-1"/>
</dbReference>
<dbReference type="TopDownProteomics" id="P06748-2">
    <molecule id="P06748-2"/>
</dbReference>
<dbReference type="TopDownProteomics" id="P06748-3">
    <molecule id="P06748-3"/>
</dbReference>
<dbReference type="Antibodypedia" id="1828">
    <property type="antibodies" value="1343 antibodies from 47 providers"/>
</dbReference>
<dbReference type="DNASU" id="4869"/>
<dbReference type="Ensembl" id="ENST00000296930.10">
    <molecule id="P06748-1"/>
    <property type="protein sequence ID" value="ENSP00000296930.5"/>
    <property type="gene ID" value="ENSG00000181163.14"/>
</dbReference>
<dbReference type="Ensembl" id="ENST00000351986.10">
    <molecule id="P06748-2"/>
    <property type="protein sequence ID" value="ENSP00000341168.6"/>
    <property type="gene ID" value="ENSG00000181163.14"/>
</dbReference>
<dbReference type="Ensembl" id="ENST00000393820.2">
    <molecule id="P06748-3"/>
    <property type="protein sequence ID" value="ENSP00000377408.2"/>
    <property type="gene ID" value="ENSG00000181163.14"/>
</dbReference>
<dbReference type="Ensembl" id="ENST00000517671.5">
    <molecule id="P06748-1"/>
    <property type="protein sequence ID" value="ENSP00000428755.1"/>
    <property type="gene ID" value="ENSG00000181163.14"/>
</dbReference>
<dbReference type="Ensembl" id="ENST00000678280.1">
    <molecule id="P06748-3"/>
    <property type="protein sequence ID" value="ENSP00000503235.1"/>
    <property type="gene ID" value="ENSG00000181163.14"/>
</dbReference>
<dbReference type="GeneID" id="4869"/>
<dbReference type="KEGG" id="hsa:4869"/>
<dbReference type="MANE-Select" id="ENST00000296930.10">
    <property type="protein sequence ID" value="ENSP00000296930.5"/>
    <property type="RefSeq nucleotide sequence ID" value="NM_002520.7"/>
    <property type="RefSeq protein sequence ID" value="NP_002511.1"/>
</dbReference>
<dbReference type="UCSC" id="uc003mbh.4">
    <molecule id="P06748-1"/>
    <property type="organism name" value="human"/>
</dbReference>
<dbReference type="AGR" id="HGNC:7910"/>
<dbReference type="CTD" id="4869"/>
<dbReference type="DisGeNET" id="4869"/>
<dbReference type="GeneCards" id="NPM1"/>
<dbReference type="HGNC" id="HGNC:7910">
    <property type="gene designation" value="NPM1"/>
</dbReference>
<dbReference type="HPA" id="ENSG00000181163">
    <property type="expression patterns" value="Low tissue specificity"/>
</dbReference>
<dbReference type="MalaCards" id="NPM1"/>
<dbReference type="MIM" id="164040">
    <property type="type" value="gene"/>
</dbReference>
<dbReference type="neXtProt" id="NX_P06748"/>
<dbReference type="OpenTargets" id="ENSG00000181163"/>
<dbReference type="Orphanet" id="98834">
    <property type="disease" value="Acute myeloblastic leukemia with maturation"/>
</dbReference>
<dbReference type="Orphanet" id="98833">
    <property type="disease" value="Acute myeloblastic leukemia without maturation"/>
</dbReference>
<dbReference type="Orphanet" id="402026">
    <property type="disease" value="Acute myeloid leukemia with NPM1 somatic mutations"/>
</dbReference>
<dbReference type="Orphanet" id="520">
    <property type="disease" value="Acute promyelocytic leukemia"/>
</dbReference>
<dbReference type="Orphanet" id="1775">
    <property type="disease" value="Dyskeratosis congenita"/>
</dbReference>
<dbReference type="Orphanet" id="98842">
    <property type="disease" value="Lymphomatoid papulosis"/>
</dbReference>
<dbReference type="Orphanet" id="300865">
    <property type="disease" value="Primary cutaneous anaplastic large cell lymphoma"/>
</dbReference>
<dbReference type="PharmGKB" id="PA31712"/>
<dbReference type="VEuPathDB" id="HostDB:ENSG00000181163"/>
<dbReference type="eggNOG" id="KOG0488">
    <property type="taxonomic scope" value="Eukaryota"/>
</dbReference>
<dbReference type="GeneTree" id="ENSGT00940000153052"/>
<dbReference type="HOGENOM" id="CLU_058838_0_0_1"/>
<dbReference type="InParanoid" id="P06748"/>
<dbReference type="OMA" id="MEKGMNL"/>
<dbReference type="OrthoDB" id="9946910at2759"/>
<dbReference type="PAN-GO" id="P06748">
    <property type="GO annotations" value="16 GO annotations based on evolutionary models"/>
</dbReference>
<dbReference type="PhylomeDB" id="P06748"/>
<dbReference type="TreeFam" id="TF327704"/>
<dbReference type="PathwayCommons" id="P06748"/>
<dbReference type="Reactome" id="R-HSA-180746">
    <property type="pathway name" value="Nuclear import of Rev protein"/>
</dbReference>
<dbReference type="Reactome" id="R-HSA-3899300">
    <property type="pathway name" value="SUMOylation of transcription cofactors"/>
</dbReference>
<dbReference type="Reactome" id="R-HSA-606279">
    <property type="pathway name" value="Deposition of new CENPA-containing nucleosomes at the centromere"/>
</dbReference>
<dbReference type="Reactome" id="R-HSA-6804115">
    <property type="pathway name" value="TP53 regulates transcription of additional cell cycle genes whose exact role in the p53 pathway remain uncertain"/>
</dbReference>
<dbReference type="Reactome" id="R-HSA-8869496">
    <property type="pathway name" value="TFAP2A acts as a transcriptional repressor during retinoic acid induced cell differentiation"/>
</dbReference>
<dbReference type="Reactome" id="R-HSA-9692914">
    <property type="pathway name" value="SARS-CoV-1-host interactions"/>
</dbReference>
<dbReference type="Reactome" id="R-HSA-9700645">
    <property type="pathway name" value="ALK mutants bind TKIs"/>
</dbReference>
<dbReference type="Reactome" id="R-HSA-9725370">
    <property type="pathway name" value="Signaling by ALK fusions and activated point mutants"/>
</dbReference>
<dbReference type="Reactome" id="R-HSA-9725371">
    <property type="pathway name" value="Nuclear events stimulated by ALK signaling in cancer"/>
</dbReference>
<dbReference type="Reactome" id="R-HSA-9833482">
    <property type="pathway name" value="PKR-mediated signaling"/>
</dbReference>
<dbReference type="SignaLink" id="P06748"/>
<dbReference type="SIGNOR" id="P06748"/>
<dbReference type="BioGRID-ORCS" id="4869">
    <property type="hits" value="540 hits in 1103 CRISPR screens"/>
</dbReference>
<dbReference type="CD-CODE" id="6AB35885">
    <property type="entry name" value="Synthetic Condensate 000052"/>
</dbReference>
<dbReference type="CD-CODE" id="71F78BB1">
    <property type="entry name" value="Synthetic Condensate 000049"/>
</dbReference>
<dbReference type="CD-CODE" id="80B4651A">
    <property type="entry name" value="Granular component"/>
</dbReference>
<dbReference type="CD-CODE" id="8C2F96ED">
    <property type="entry name" value="Centrosome"/>
</dbReference>
<dbReference type="CD-CODE" id="91857CE7">
    <property type="entry name" value="Nucleolus"/>
</dbReference>
<dbReference type="CD-CODE" id="9E412E21">
    <property type="entry name" value="Synthetic Condensate 000044"/>
</dbReference>
<dbReference type="CD-CODE" id="A3AA02E8">
    <property type="entry name" value="Synthetic Condensate 000061"/>
</dbReference>
<dbReference type="CD-CODE" id="CBF57B02">
    <property type="entry name" value="Synthetic Condensate 000043"/>
</dbReference>
<dbReference type="CD-CODE" id="D551D4B1">
    <property type="entry name" value="Synthetic Condensate 000051"/>
</dbReference>
<dbReference type="CD-CODE" id="DEE660B4">
    <property type="entry name" value="Stress granule"/>
</dbReference>
<dbReference type="ChiTaRS" id="NPM1">
    <property type="organism name" value="human"/>
</dbReference>
<dbReference type="EvolutionaryTrace" id="P06748"/>
<dbReference type="GeneWiki" id="NPM1"/>
<dbReference type="GenomeRNAi" id="4869"/>
<dbReference type="Pharos" id="P06748">
    <property type="development level" value="Tbio"/>
</dbReference>
<dbReference type="PRO" id="PR:P06748"/>
<dbReference type="Proteomes" id="UP000005640">
    <property type="component" value="Chromosome 5"/>
</dbReference>
<dbReference type="RNAct" id="P06748">
    <property type="molecule type" value="protein"/>
</dbReference>
<dbReference type="Bgee" id="ENSG00000181163">
    <property type="expression patterns" value="Expressed in calcaneal tendon and 191 other cell types or tissues"/>
</dbReference>
<dbReference type="ExpressionAtlas" id="P06748">
    <property type="expression patterns" value="baseline and differential"/>
</dbReference>
<dbReference type="GO" id="GO:0005813">
    <property type="term" value="C:centrosome"/>
    <property type="evidence" value="ECO:0000314"/>
    <property type="project" value="UniProtKB"/>
</dbReference>
<dbReference type="GO" id="GO:0005737">
    <property type="term" value="C:cytoplasm"/>
    <property type="evidence" value="ECO:0000314"/>
    <property type="project" value="UniProtKB"/>
</dbReference>
<dbReference type="GO" id="GO:0005829">
    <property type="term" value="C:cytosol"/>
    <property type="evidence" value="ECO:0000304"/>
    <property type="project" value="Reactome"/>
</dbReference>
<dbReference type="GO" id="GO:0005925">
    <property type="term" value="C:focal adhesion"/>
    <property type="evidence" value="ECO:0007005"/>
    <property type="project" value="UniProtKB"/>
</dbReference>
<dbReference type="GO" id="GO:0001652">
    <property type="term" value="C:granular component"/>
    <property type="evidence" value="ECO:0000304"/>
    <property type="project" value="Reactome"/>
</dbReference>
<dbReference type="GO" id="GO:0015934">
    <property type="term" value="C:large ribosomal subunit"/>
    <property type="evidence" value="ECO:0007669"/>
    <property type="project" value="Ensembl"/>
</dbReference>
<dbReference type="GO" id="GO:0016020">
    <property type="term" value="C:membrane"/>
    <property type="evidence" value="ECO:0007005"/>
    <property type="project" value="UniProtKB"/>
</dbReference>
<dbReference type="GO" id="GO:0016607">
    <property type="term" value="C:nuclear speck"/>
    <property type="evidence" value="ECO:0007669"/>
    <property type="project" value="Ensembl"/>
</dbReference>
<dbReference type="GO" id="GO:0005730">
    <property type="term" value="C:nucleolus"/>
    <property type="evidence" value="ECO:0000314"/>
    <property type="project" value="HPA"/>
</dbReference>
<dbReference type="GO" id="GO:0005654">
    <property type="term" value="C:nucleoplasm"/>
    <property type="evidence" value="ECO:0000314"/>
    <property type="project" value="HPA"/>
</dbReference>
<dbReference type="GO" id="GO:0005634">
    <property type="term" value="C:nucleus"/>
    <property type="evidence" value="ECO:0000314"/>
    <property type="project" value="UniProtKB"/>
</dbReference>
<dbReference type="GO" id="GO:0032991">
    <property type="term" value="C:protein-containing complex"/>
    <property type="evidence" value="ECO:0000314"/>
    <property type="project" value="CAFA"/>
</dbReference>
<dbReference type="GO" id="GO:0032993">
    <property type="term" value="C:protein-DNA complex"/>
    <property type="evidence" value="ECO:0000314"/>
    <property type="project" value="CAFA"/>
</dbReference>
<dbReference type="GO" id="GO:1990904">
    <property type="term" value="C:ribonucleoprotein complex"/>
    <property type="evidence" value="ECO:0000314"/>
    <property type="project" value="MGI"/>
</dbReference>
<dbReference type="GO" id="GO:0015935">
    <property type="term" value="C:small ribosomal subunit"/>
    <property type="evidence" value="ECO:0007669"/>
    <property type="project" value="Ensembl"/>
</dbReference>
<dbReference type="GO" id="GO:0031616">
    <property type="term" value="C:spindle pole centrosome"/>
    <property type="evidence" value="ECO:0000314"/>
    <property type="project" value="UniProtKB"/>
</dbReference>
<dbReference type="GO" id="GO:0003682">
    <property type="term" value="F:chromatin binding"/>
    <property type="evidence" value="ECO:0000318"/>
    <property type="project" value="GO_Central"/>
</dbReference>
<dbReference type="GO" id="GO:0001046">
    <property type="term" value="F:core promoter sequence-specific DNA binding"/>
    <property type="evidence" value="ECO:0000314"/>
    <property type="project" value="CAFA"/>
</dbReference>
<dbReference type="GO" id="GO:0140297">
    <property type="term" value="F:DNA-binding transcription factor binding"/>
    <property type="evidence" value="ECO:0000353"/>
    <property type="project" value="CAFA"/>
</dbReference>
<dbReference type="GO" id="GO:0042393">
    <property type="term" value="F:histone binding"/>
    <property type="evidence" value="ECO:0000314"/>
    <property type="project" value="UniProtKB"/>
</dbReference>
<dbReference type="GO" id="GO:0060090">
    <property type="term" value="F:molecular adaptor activity"/>
    <property type="evidence" value="ECO:0000314"/>
    <property type="project" value="UniProt"/>
</dbReference>
<dbReference type="GO" id="GO:0051059">
    <property type="term" value="F:NF-kappaB binding"/>
    <property type="evidence" value="ECO:0000314"/>
    <property type="project" value="UniProtKB"/>
</dbReference>
<dbReference type="GO" id="GO:0042803">
    <property type="term" value="F:protein homodimerization activity"/>
    <property type="evidence" value="ECO:0000314"/>
    <property type="project" value="UniProtKB"/>
</dbReference>
<dbReference type="GO" id="GO:0019901">
    <property type="term" value="F:protein kinase binding"/>
    <property type="evidence" value="ECO:0000353"/>
    <property type="project" value="UniProtKB"/>
</dbReference>
<dbReference type="GO" id="GO:0004860">
    <property type="term" value="F:protein kinase inhibitor activity"/>
    <property type="evidence" value="ECO:0000314"/>
    <property type="project" value="UniProtKB"/>
</dbReference>
<dbReference type="GO" id="GO:0043023">
    <property type="term" value="F:ribosomal large subunit binding"/>
    <property type="evidence" value="ECO:0000314"/>
    <property type="project" value="MGI"/>
</dbReference>
<dbReference type="GO" id="GO:0043024">
    <property type="term" value="F:ribosomal small subunit binding"/>
    <property type="evidence" value="ECO:0000314"/>
    <property type="project" value="MGI"/>
</dbReference>
<dbReference type="GO" id="GO:0003723">
    <property type="term" value="F:RNA binding"/>
    <property type="evidence" value="ECO:0000314"/>
    <property type="project" value="UniProtKB"/>
</dbReference>
<dbReference type="GO" id="GO:0019843">
    <property type="term" value="F:rRNA binding"/>
    <property type="evidence" value="ECO:0000353"/>
    <property type="project" value="DisProt"/>
</dbReference>
<dbReference type="GO" id="GO:0030957">
    <property type="term" value="F:Tat protein binding"/>
    <property type="evidence" value="ECO:0000314"/>
    <property type="project" value="UniProtKB"/>
</dbReference>
<dbReference type="GO" id="GO:0003713">
    <property type="term" value="F:transcription coactivator activity"/>
    <property type="evidence" value="ECO:0000314"/>
    <property type="project" value="UniProtKB"/>
</dbReference>
<dbReference type="GO" id="GO:0051082">
    <property type="term" value="F:unfolded protein binding"/>
    <property type="evidence" value="ECO:0000314"/>
    <property type="project" value="UniProtKB"/>
</dbReference>
<dbReference type="GO" id="GO:0006884">
    <property type="term" value="P:cell volume homeostasis"/>
    <property type="evidence" value="ECO:0007669"/>
    <property type="project" value="Ensembl"/>
</dbReference>
<dbReference type="GO" id="GO:0034644">
    <property type="term" value="P:cellular response to UV"/>
    <property type="evidence" value="ECO:0000314"/>
    <property type="project" value="CAFA"/>
</dbReference>
<dbReference type="GO" id="GO:0090398">
    <property type="term" value="P:cellular senescence"/>
    <property type="evidence" value="ECO:0000315"/>
    <property type="project" value="GO_Central"/>
</dbReference>
<dbReference type="GO" id="GO:0007098">
    <property type="term" value="P:centrosome cycle"/>
    <property type="evidence" value="ECO:0000315"/>
    <property type="project" value="UniProtKB"/>
</dbReference>
<dbReference type="GO" id="GO:0006338">
    <property type="term" value="P:chromatin remodeling"/>
    <property type="evidence" value="ECO:0000318"/>
    <property type="project" value="GO_Central"/>
</dbReference>
<dbReference type="GO" id="GO:0006281">
    <property type="term" value="P:DNA repair"/>
    <property type="evidence" value="ECO:0000314"/>
    <property type="project" value="UniProtKB"/>
</dbReference>
<dbReference type="GO" id="GO:0006886">
    <property type="term" value="P:intracellular protein transport"/>
    <property type="evidence" value="ECO:0000304"/>
    <property type="project" value="UniProtKB"/>
</dbReference>
<dbReference type="GO" id="GO:0030225">
    <property type="term" value="P:macrophage differentiation"/>
    <property type="evidence" value="ECO:0000314"/>
    <property type="project" value="UniProt"/>
</dbReference>
<dbReference type="GO" id="GO:0043066">
    <property type="term" value="P:negative regulation of apoptotic process"/>
    <property type="evidence" value="ECO:0000314"/>
    <property type="project" value="UniProtKB"/>
</dbReference>
<dbReference type="GO" id="GO:0008285">
    <property type="term" value="P:negative regulation of cell population proliferation"/>
    <property type="evidence" value="ECO:0000315"/>
    <property type="project" value="UniProtKB"/>
</dbReference>
<dbReference type="GO" id="GO:0010826">
    <property type="term" value="P:negative regulation of centrosome duplication"/>
    <property type="evidence" value="ECO:0000315"/>
    <property type="project" value="UniProtKB"/>
</dbReference>
<dbReference type="GO" id="GO:0048025">
    <property type="term" value="P:negative regulation of mRNA splicing, via spliceosome"/>
    <property type="evidence" value="ECO:0007669"/>
    <property type="project" value="Ensembl"/>
</dbReference>
<dbReference type="GO" id="GO:0044387">
    <property type="term" value="P:negative regulation of protein kinase activity by regulation of protein phosphorylation"/>
    <property type="evidence" value="ECO:0000314"/>
    <property type="project" value="UniProtKB"/>
</dbReference>
<dbReference type="GO" id="GO:0006913">
    <property type="term" value="P:nucleocytoplasmic transport"/>
    <property type="evidence" value="ECO:0000314"/>
    <property type="project" value="UniProtKB"/>
</dbReference>
<dbReference type="GO" id="GO:0006334">
    <property type="term" value="P:nucleosome assembly"/>
    <property type="evidence" value="ECO:0000314"/>
    <property type="project" value="UniProtKB"/>
</dbReference>
<dbReference type="GO" id="GO:1902751">
    <property type="term" value="P:positive regulation of cell cycle G2/M phase transition"/>
    <property type="evidence" value="ECO:0000314"/>
    <property type="project" value="UniProtKB"/>
</dbReference>
<dbReference type="GO" id="GO:0008284">
    <property type="term" value="P:positive regulation of cell population proliferation"/>
    <property type="evidence" value="ECO:0000314"/>
    <property type="project" value="UniProtKB"/>
</dbReference>
<dbReference type="GO" id="GO:0010825">
    <property type="term" value="P:positive regulation of centrosome duplication"/>
    <property type="evidence" value="ECO:0007669"/>
    <property type="project" value="Ensembl"/>
</dbReference>
<dbReference type="GO" id="GO:0045893">
    <property type="term" value="P:positive regulation of DNA-templated transcription"/>
    <property type="evidence" value="ECO:0000314"/>
    <property type="project" value="UniProtKB"/>
</dbReference>
<dbReference type="GO" id="GO:0051092">
    <property type="term" value="P:positive regulation of NF-kappaB transcription factor activity"/>
    <property type="evidence" value="ECO:0000315"/>
    <property type="project" value="UniProtKB"/>
</dbReference>
<dbReference type="GO" id="GO:1904751">
    <property type="term" value="P:positive regulation of protein localization to nucleolus"/>
    <property type="evidence" value="ECO:0007669"/>
    <property type="project" value="Ensembl"/>
</dbReference>
<dbReference type="GO" id="GO:0031398">
    <property type="term" value="P:positive regulation of protein ubiquitination"/>
    <property type="evidence" value="ECO:0007669"/>
    <property type="project" value="Ensembl"/>
</dbReference>
<dbReference type="GO" id="GO:0045944">
    <property type="term" value="P:positive regulation of transcription by RNA polymerase II"/>
    <property type="evidence" value="ECO:0000314"/>
    <property type="project" value="CAFA"/>
</dbReference>
<dbReference type="GO" id="GO:0045727">
    <property type="term" value="P:positive regulation of translation"/>
    <property type="evidence" value="ECO:0000314"/>
    <property type="project" value="UniProtKB"/>
</dbReference>
<dbReference type="GO" id="GO:0006606">
    <property type="term" value="P:protein import into nucleus"/>
    <property type="evidence" value="ECO:0000314"/>
    <property type="project" value="UniProt"/>
</dbReference>
<dbReference type="GO" id="GO:0008104">
    <property type="term" value="P:protein localization"/>
    <property type="evidence" value="ECO:0000314"/>
    <property type="project" value="UniProtKB"/>
</dbReference>
<dbReference type="GO" id="GO:0050821">
    <property type="term" value="P:protein stabilization"/>
    <property type="evidence" value="ECO:0007669"/>
    <property type="project" value="Ensembl"/>
</dbReference>
<dbReference type="GO" id="GO:0001558">
    <property type="term" value="P:regulation of cell growth"/>
    <property type="evidence" value="ECO:0007669"/>
    <property type="project" value="Ensembl"/>
</dbReference>
<dbReference type="GO" id="GO:0046599">
    <property type="term" value="P:regulation of centriole replication"/>
    <property type="evidence" value="ECO:0000315"/>
    <property type="project" value="UniProtKB"/>
</dbReference>
<dbReference type="GO" id="GO:0010824">
    <property type="term" value="P:regulation of centrosome duplication"/>
    <property type="evidence" value="ECO:0000318"/>
    <property type="project" value="GO_Central"/>
</dbReference>
<dbReference type="GO" id="GO:0043516">
    <property type="term" value="P:regulation of DNA damage response, signal transduction by p53 class mediator"/>
    <property type="evidence" value="ECO:0007669"/>
    <property type="project" value="Ensembl"/>
</dbReference>
<dbReference type="GO" id="GO:0060735">
    <property type="term" value="P:regulation of eIF2 alpha phosphorylation by dsRNA"/>
    <property type="evidence" value="ECO:0000314"/>
    <property type="project" value="UniProtKB"/>
</dbReference>
<dbReference type="GO" id="GO:0032071">
    <property type="term" value="P:regulation of endodeoxyribonuclease activity"/>
    <property type="evidence" value="ECO:0000314"/>
    <property type="project" value="UniProtKB"/>
</dbReference>
<dbReference type="GO" id="GO:0060699">
    <property type="term" value="P:regulation of endoribonuclease activity"/>
    <property type="evidence" value="ECO:0000314"/>
    <property type="project" value="UniProtKB"/>
</dbReference>
<dbReference type="GO" id="GO:1902629">
    <property type="term" value="P:regulation of mRNA stability involved in cellular response to UV"/>
    <property type="evidence" value="ECO:0000315"/>
    <property type="project" value="UniProtKB"/>
</dbReference>
<dbReference type="GO" id="GO:0042273">
    <property type="term" value="P:ribosomal large subunit biogenesis"/>
    <property type="evidence" value="ECO:0000318"/>
    <property type="project" value="GO_Central"/>
</dbReference>
<dbReference type="GO" id="GO:0000055">
    <property type="term" value="P:ribosomal large subunit export from nucleus"/>
    <property type="evidence" value="ECO:0000318"/>
    <property type="project" value="GO_Central"/>
</dbReference>
<dbReference type="GO" id="GO:0042274">
    <property type="term" value="P:ribosomal small subunit biogenesis"/>
    <property type="evidence" value="ECO:0000318"/>
    <property type="project" value="GO_Central"/>
</dbReference>
<dbReference type="GO" id="GO:0000056">
    <property type="term" value="P:ribosomal small subunit export from nucleus"/>
    <property type="evidence" value="ECO:0000318"/>
    <property type="project" value="GO_Central"/>
</dbReference>
<dbReference type="GO" id="GO:0042255">
    <property type="term" value="P:ribosome assembly"/>
    <property type="evidence" value="ECO:0000304"/>
    <property type="project" value="UniProtKB"/>
</dbReference>
<dbReference type="GO" id="GO:0007165">
    <property type="term" value="P:signal transduction"/>
    <property type="evidence" value="ECO:0000303"/>
    <property type="project" value="UniProtKB"/>
</dbReference>
<dbReference type="DisProt" id="DP01474"/>
<dbReference type="FunFam" id="1.10.10.2100:FF:000001">
    <property type="entry name" value="Nucleophosmin 1"/>
    <property type="match status" value="1"/>
</dbReference>
<dbReference type="FunFam" id="2.60.120.340:FF:000001">
    <property type="entry name" value="Nucleophosmin 1"/>
    <property type="match status" value="1"/>
</dbReference>
<dbReference type="Gene3D" id="1.10.10.2100">
    <property type="match status" value="1"/>
</dbReference>
<dbReference type="Gene3D" id="2.60.120.340">
    <property type="entry name" value="Nucleoplasmin core domain"/>
    <property type="match status" value="1"/>
</dbReference>
<dbReference type="IDEAL" id="IID00295"/>
<dbReference type="InterPro" id="IPR032569">
    <property type="entry name" value="NPM1_C"/>
</dbReference>
<dbReference type="InterPro" id="IPR004301">
    <property type="entry name" value="Nucleoplasmin"/>
</dbReference>
<dbReference type="InterPro" id="IPR024057">
    <property type="entry name" value="Nucleoplasmin_core_dom"/>
</dbReference>
<dbReference type="InterPro" id="IPR036824">
    <property type="entry name" value="Nucleoplasmin_core_dom_sf"/>
</dbReference>
<dbReference type="PANTHER" id="PTHR22747:SF28">
    <property type="entry name" value="NUCLEOPHOSMIN"/>
    <property type="match status" value="1"/>
</dbReference>
<dbReference type="PANTHER" id="PTHR22747">
    <property type="entry name" value="NUCLEOPLASMIN"/>
    <property type="match status" value="1"/>
</dbReference>
<dbReference type="Pfam" id="PF16276">
    <property type="entry name" value="NPM1-C"/>
    <property type="match status" value="1"/>
</dbReference>
<dbReference type="Pfam" id="PF03066">
    <property type="entry name" value="Nucleoplasmin"/>
    <property type="match status" value="1"/>
</dbReference>
<dbReference type="SUPFAM" id="SSF69203">
    <property type="entry name" value="Nucleoplasmin-like core domain"/>
    <property type="match status" value="1"/>
</dbReference>
<proteinExistence type="evidence at protein level"/>
<organism>
    <name type="scientific">Homo sapiens</name>
    <name type="common">Human</name>
    <dbReference type="NCBI Taxonomy" id="9606"/>
    <lineage>
        <taxon>Eukaryota</taxon>
        <taxon>Metazoa</taxon>
        <taxon>Chordata</taxon>
        <taxon>Craniata</taxon>
        <taxon>Vertebrata</taxon>
        <taxon>Euteleostomi</taxon>
        <taxon>Mammalia</taxon>
        <taxon>Eutheria</taxon>
        <taxon>Euarchontoglires</taxon>
        <taxon>Primates</taxon>
        <taxon>Haplorrhini</taxon>
        <taxon>Catarrhini</taxon>
        <taxon>Hominidae</taxon>
        <taxon>Homo</taxon>
    </lineage>
</organism>
<evidence type="ECO:0000250" key="1"/>
<evidence type="ECO:0000250" key="2">
    <source>
        <dbReference type="UniProtKB" id="Q61937"/>
    </source>
</evidence>
<evidence type="ECO:0000255" key="3"/>
<evidence type="ECO:0000256" key="4">
    <source>
        <dbReference type="SAM" id="MobiDB-lite"/>
    </source>
</evidence>
<evidence type="ECO:0000269" key="5">
    <source>
    </source>
</evidence>
<evidence type="ECO:0000269" key="6">
    <source>
    </source>
</evidence>
<evidence type="ECO:0000269" key="7">
    <source>
    </source>
</evidence>
<evidence type="ECO:0000269" key="8">
    <source>
    </source>
</evidence>
<evidence type="ECO:0000269" key="9">
    <source>
    </source>
</evidence>
<evidence type="ECO:0000269" key="10">
    <source>
    </source>
</evidence>
<evidence type="ECO:0000269" key="11">
    <source>
    </source>
</evidence>
<evidence type="ECO:0000269" key="12">
    <source>
    </source>
</evidence>
<evidence type="ECO:0000269" key="13">
    <source>
    </source>
</evidence>
<evidence type="ECO:0000269" key="14">
    <source>
    </source>
</evidence>
<evidence type="ECO:0000269" key="15">
    <source>
    </source>
</evidence>
<evidence type="ECO:0000269" key="16">
    <source>
    </source>
</evidence>
<evidence type="ECO:0000269" key="17">
    <source>
    </source>
</evidence>
<evidence type="ECO:0000269" key="18">
    <source>
    </source>
</evidence>
<evidence type="ECO:0000269" key="19">
    <source>
    </source>
</evidence>
<evidence type="ECO:0000269" key="20">
    <source>
    </source>
</evidence>
<evidence type="ECO:0000269" key="21">
    <source>
    </source>
</evidence>
<evidence type="ECO:0000269" key="22">
    <source>
    </source>
</evidence>
<evidence type="ECO:0000269" key="23">
    <source>
    </source>
</evidence>
<evidence type="ECO:0000269" key="24">
    <source>
    </source>
</evidence>
<evidence type="ECO:0000269" key="25">
    <source>
    </source>
</evidence>
<evidence type="ECO:0000269" key="26">
    <source>
    </source>
</evidence>
<evidence type="ECO:0000269" key="27">
    <source>
    </source>
</evidence>
<evidence type="ECO:0000269" key="28">
    <source>
    </source>
</evidence>
<evidence type="ECO:0000269" key="29">
    <source>
    </source>
</evidence>
<evidence type="ECO:0000269" key="30">
    <source>
    </source>
</evidence>
<evidence type="ECO:0000269" key="31">
    <source>
    </source>
</evidence>
<evidence type="ECO:0000269" key="32">
    <source>
    </source>
</evidence>
<evidence type="ECO:0000269" key="33">
    <source>
    </source>
</evidence>
<evidence type="ECO:0000269" key="34">
    <source>
    </source>
</evidence>
<evidence type="ECO:0000269" key="35">
    <source>
    </source>
</evidence>
<evidence type="ECO:0000269" key="36">
    <source>
    </source>
</evidence>
<evidence type="ECO:0000269" key="37">
    <source>
    </source>
</evidence>
<evidence type="ECO:0000269" key="38">
    <source>
    </source>
</evidence>
<evidence type="ECO:0000269" key="39">
    <source>
    </source>
</evidence>
<evidence type="ECO:0000269" key="40">
    <source>
    </source>
</evidence>
<evidence type="ECO:0000269" key="41">
    <source>
    </source>
</evidence>
<evidence type="ECO:0000269" key="42">
    <source>
    </source>
</evidence>
<evidence type="ECO:0000269" key="43">
    <source>
    </source>
</evidence>
<evidence type="ECO:0000269" key="44">
    <source>
    </source>
</evidence>
<evidence type="ECO:0000269" key="45">
    <source>
    </source>
</evidence>
<evidence type="ECO:0000269" key="46">
    <source ref="17"/>
</evidence>
<evidence type="ECO:0000303" key="47">
    <source>
    </source>
</evidence>
<evidence type="ECO:0000303" key="48">
    <source ref="5"/>
</evidence>
<evidence type="ECO:0000305" key="49"/>
<evidence type="ECO:0000305" key="50">
    <source>
    </source>
</evidence>
<evidence type="ECO:0000312" key="51">
    <source>
        <dbReference type="HGNC" id="HGNC:7910"/>
    </source>
</evidence>
<evidence type="ECO:0007744" key="52">
    <source>
    </source>
</evidence>
<evidence type="ECO:0007744" key="53">
    <source>
    </source>
</evidence>
<evidence type="ECO:0007744" key="54">
    <source>
    </source>
</evidence>
<evidence type="ECO:0007744" key="55">
    <source>
    </source>
</evidence>
<evidence type="ECO:0007744" key="56">
    <source>
    </source>
</evidence>
<evidence type="ECO:0007744" key="57">
    <source>
    </source>
</evidence>
<evidence type="ECO:0007744" key="58">
    <source>
    </source>
</evidence>
<evidence type="ECO:0007744" key="59">
    <source>
    </source>
</evidence>
<evidence type="ECO:0007744" key="60">
    <source>
    </source>
</evidence>
<evidence type="ECO:0007744" key="61">
    <source>
    </source>
</evidence>
<evidence type="ECO:0007744" key="62">
    <source>
    </source>
</evidence>
<evidence type="ECO:0007744" key="63">
    <source>
    </source>
</evidence>
<evidence type="ECO:0007744" key="64">
    <source>
    </source>
</evidence>
<evidence type="ECO:0007744" key="65">
    <source>
    </source>
</evidence>
<evidence type="ECO:0007744" key="66">
    <source>
    </source>
</evidence>
<evidence type="ECO:0007744" key="67">
    <source>
    </source>
</evidence>
<evidence type="ECO:0007744" key="68">
    <source>
    </source>
</evidence>
<evidence type="ECO:0007744" key="69">
    <source>
    </source>
</evidence>
<evidence type="ECO:0007744" key="70">
    <source>
    </source>
</evidence>
<evidence type="ECO:0007744" key="71">
    <source>
    </source>
</evidence>
<evidence type="ECO:0007744" key="72">
    <source>
    </source>
</evidence>
<evidence type="ECO:0007829" key="73">
    <source>
        <dbReference type="PDB" id="2LLH"/>
    </source>
</evidence>
<evidence type="ECO:0007829" key="74">
    <source>
        <dbReference type="PDB" id="5EHD"/>
    </source>
</evidence>